<feature type="chain" id="PRO_0000093288" description="Phospholipid-transporting ATPase ABCA1">
    <location>
        <begin position="1"/>
        <end position="2261"/>
    </location>
</feature>
<feature type="transmembrane region" description="Helical" evidence="2">
    <location>
        <begin position="22"/>
        <end position="42"/>
    </location>
</feature>
<feature type="topological domain" description="Extracellular">
    <location>
        <begin position="43"/>
        <end position="639"/>
    </location>
</feature>
<feature type="transmembrane region" description="Helical" evidence="2">
    <location>
        <begin position="640"/>
        <end position="660"/>
    </location>
</feature>
<feature type="transmembrane region" description="Helical" evidence="2">
    <location>
        <begin position="683"/>
        <end position="703"/>
    </location>
</feature>
<feature type="transmembrane region" description="Helical" evidence="2">
    <location>
        <begin position="716"/>
        <end position="736"/>
    </location>
</feature>
<feature type="transmembrane region" description="Helical" evidence="2">
    <location>
        <begin position="745"/>
        <end position="765"/>
    </location>
</feature>
<feature type="transmembrane region" description="Helical" evidence="2">
    <location>
        <begin position="777"/>
        <end position="797"/>
    </location>
</feature>
<feature type="transmembrane region" description="Helical" evidence="2">
    <location>
        <begin position="827"/>
        <end position="847"/>
    </location>
</feature>
<feature type="transmembrane region" description="Helical" evidence="2">
    <location>
        <begin position="1041"/>
        <end position="1057"/>
    </location>
</feature>
<feature type="transmembrane region" description="Helical" evidence="2">
    <location>
        <begin position="1351"/>
        <end position="1371"/>
    </location>
</feature>
<feature type="topological domain" description="Extracellular">
    <location>
        <begin position="1372"/>
        <end position="1656"/>
    </location>
</feature>
<feature type="transmembrane region" description="Helical" evidence="2">
    <location>
        <begin position="1657"/>
        <end position="1677"/>
    </location>
</feature>
<feature type="transmembrane region" description="Helical" evidence="2">
    <location>
        <begin position="1703"/>
        <end position="1723"/>
    </location>
</feature>
<feature type="transmembrane region" description="Helical" evidence="2">
    <location>
        <begin position="1735"/>
        <end position="1755"/>
    </location>
</feature>
<feature type="transmembrane region" description="Helical" evidence="2">
    <location>
        <begin position="1768"/>
        <end position="1788"/>
    </location>
</feature>
<feature type="transmembrane region" description="Helical" evidence="2">
    <location>
        <begin position="1802"/>
        <end position="1822"/>
    </location>
</feature>
<feature type="transmembrane region" description="Helical" evidence="2">
    <location>
        <begin position="1852"/>
        <end position="1872"/>
    </location>
</feature>
<feature type="domain" description="ABC transporter 1" evidence="3">
    <location>
        <begin position="899"/>
        <end position="1131"/>
    </location>
</feature>
<feature type="domain" description="ABC transporter 2" evidence="3">
    <location>
        <begin position="1912"/>
        <end position="2144"/>
    </location>
</feature>
<feature type="region of interest" description="Annulus domain 1" evidence="59">
    <location>
        <begin position="69"/>
        <end position="80"/>
    </location>
</feature>
<feature type="region of interest" description="Annulus domain 2" evidence="59">
    <location>
        <begin position="368"/>
        <end position="379"/>
    </location>
</feature>
<feature type="region of interest" description="Gateway domain" evidence="59">
    <location>
        <begin position="564"/>
        <end position="594"/>
    </location>
</feature>
<feature type="region of interest" description="Disordered" evidence="4">
    <location>
        <begin position="1283"/>
        <end position="1312"/>
    </location>
</feature>
<feature type="compositionally biased region" description="Acidic residues" evidence="4">
    <location>
        <begin position="1287"/>
        <end position="1299"/>
    </location>
</feature>
<feature type="binding site" evidence="3">
    <location>
        <begin position="933"/>
        <end position="940"/>
    </location>
    <ligand>
        <name>ATP</name>
        <dbReference type="ChEBI" id="CHEBI:30616"/>
        <label>1</label>
    </ligand>
</feature>
<feature type="binding site" evidence="3">
    <location>
        <begin position="1946"/>
        <end position="1953"/>
    </location>
    <ligand>
        <name>ATP</name>
        <dbReference type="ChEBI" id="CHEBI:30616"/>
        <label>2</label>
    </ligand>
</feature>
<feature type="modified residue" description="Phosphoserine; by PKA" evidence="26">
    <location>
        <position position="1042"/>
    </location>
</feature>
<feature type="modified residue" description="Phosphoserine" evidence="1">
    <location>
        <position position="1296"/>
    </location>
</feature>
<feature type="modified residue" description="Phosphoserine; by PKA" evidence="26">
    <location>
        <position position="2054"/>
    </location>
</feature>
<feature type="lipid moiety-binding region" description="S-palmitoyl cysteine" evidence="48">
    <location>
        <position position="3"/>
    </location>
</feature>
<feature type="lipid moiety-binding region" description="S-palmitoyl cysteine" evidence="48">
    <location>
        <position position="23"/>
    </location>
</feature>
<feature type="lipid moiety-binding region" description="S-palmitoyl cysteine" evidence="48">
    <location>
        <position position="1110"/>
    </location>
</feature>
<feature type="lipid moiety-binding region" description="S-palmitoyl cysteine" evidence="48">
    <location>
        <position position="1111"/>
    </location>
</feature>
<feature type="glycosylation site" description="N-linked (GlcNAc...) asparagine" evidence="2">
    <location>
        <position position="14"/>
    </location>
</feature>
<feature type="glycosylation site" description="N-linked (GlcNAc...) asparagine" evidence="46">
    <location>
        <position position="98"/>
    </location>
</feature>
<feature type="glycosylation site" description="N-linked (GlcNAc...) asparagine" evidence="2">
    <location>
        <position position="151"/>
    </location>
</feature>
<feature type="glycosylation site" description="N-linked (GlcNAc...) asparagine" evidence="2">
    <location>
        <position position="161"/>
    </location>
</feature>
<feature type="glycosylation site" description="N-linked (GlcNAc...) asparagine" evidence="2">
    <location>
        <position position="196"/>
    </location>
</feature>
<feature type="glycosylation site" description="N-linked (GlcNAc...) asparagine" evidence="46">
    <location>
        <position position="244"/>
    </location>
</feature>
<feature type="glycosylation site" description="N-linked (GlcNAc...) asparagine" evidence="2">
    <location>
        <position position="292"/>
    </location>
</feature>
<feature type="glycosylation site" description="N-linked (GlcNAc...) asparagine" evidence="2">
    <location>
        <position position="337"/>
    </location>
</feature>
<feature type="glycosylation site" description="N-linked (GlcNAc...) asparagine" evidence="2">
    <location>
        <position position="349"/>
    </location>
</feature>
<feature type="glycosylation site" description="N-linked (GlcNAc...) asparagine" evidence="2">
    <location>
        <position position="400"/>
    </location>
</feature>
<feature type="glycosylation site" description="N-linked (GlcNAc...) asparagine" evidence="2">
    <location>
        <position position="478"/>
    </location>
</feature>
<feature type="glycosylation site" description="N-linked (GlcNAc...) asparagine" evidence="2">
    <location>
        <position position="489"/>
    </location>
</feature>
<feature type="glycosylation site" description="N-linked (GlcNAc...) asparagine" evidence="2">
    <location>
        <position position="521"/>
    </location>
</feature>
<feature type="glycosylation site" description="N-linked (GlcNAc...) asparagine" evidence="2">
    <location>
        <position position="820"/>
    </location>
</feature>
<feature type="glycosylation site" description="N-linked (GlcNAc...) asparagine" evidence="2">
    <location>
        <position position="1144"/>
    </location>
</feature>
<feature type="glycosylation site" description="N-linked (GlcNAc...) asparagine" evidence="2">
    <location>
        <position position="1294"/>
    </location>
</feature>
<feature type="glycosylation site" description="N-linked (GlcNAc...) asparagine" evidence="2">
    <location>
        <position position="1453"/>
    </location>
</feature>
<feature type="glycosylation site" description="N-linked (GlcNAc...) asparagine" evidence="2">
    <location>
        <position position="1504"/>
    </location>
</feature>
<feature type="glycosylation site" description="N-linked (GlcNAc...) asparagine" evidence="2">
    <location>
        <position position="1637"/>
    </location>
</feature>
<feature type="glycosylation site" description="N-linked (GlcNAc...) asparagine" evidence="2">
    <location>
        <position position="2044"/>
    </location>
</feature>
<feature type="glycosylation site" description="N-linked (GlcNAc...) asparagine" evidence="2">
    <location>
        <position position="2238"/>
    </location>
</feature>
<feature type="disulfide bond" evidence="47">
    <location>
        <begin position="75"/>
        <end position="309"/>
    </location>
</feature>
<feature type="disulfide bond" evidence="47">
    <location>
        <begin position="1463"/>
        <end position="1477"/>
    </location>
</feature>
<feature type="sequence variant" id="VAR_017529" description="In FHA1; Alabama; dbSNP:rs145183203." evidence="27">
    <original>P</original>
    <variation>L</variation>
    <location>
        <position position="85"/>
    </location>
</feature>
<feature type="sequence variant" id="VAR_035724" description="In a colorectal cancer sample; somatic mutation." evidence="42">
    <original>E</original>
    <variation>D</variation>
    <location>
        <position position="210"/>
    </location>
</feature>
<feature type="sequence variant" id="VAR_012618" description="In dbSNP:rs2230806." evidence="12 14 16 20 29 31 38">
    <original>R</original>
    <variation>K</variation>
    <location>
        <position position="219"/>
    </location>
</feature>
<feature type="sequence variant" id="VAR_012619" description="In dbSNP:rs9282541." evidence="12 51">
    <original>R</original>
    <variation>C</variation>
    <location>
        <position position="230"/>
    </location>
</feature>
<feature type="sequence variant" id="VAR_062481" description="In dbSNP:rs142625938." evidence="37">
    <original>P</original>
    <variation>A</variation>
    <location>
        <position position="248"/>
    </location>
</feature>
<feature type="sequence variant" id="VAR_012620" description="In TGD; deficient cellular cholesterol efflux; dbSNP:rs758100110." evidence="21">
    <original>A</original>
    <variation>T</variation>
    <location>
        <position position="255"/>
    </location>
</feature>
<feature type="sequence variant" id="VAR_062482" description="In TGD." evidence="34">
    <original>E</original>
    <variation>K</variation>
    <location>
        <position position="284"/>
    </location>
</feature>
<feature type="sequence variant" id="VAR_062483" description="In dbSNP:rs775035559." evidence="38">
    <original>S</original>
    <variation>C</variation>
    <location>
        <position position="364"/>
    </location>
</feature>
<feature type="sequence variant" id="VAR_009145" description="In dbSNP:rs9282543." evidence="7 14">
    <original>V</original>
    <variation>A</variation>
    <location>
        <position position="399"/>
    </location>
</feature>
<feature type="sequence variant" id="VAR_062484" description="In dbSNP:rs138487227." evidence="37">
    <original>K</original>
    <variation>Q</variation>
    <location>
        <position position="401"/>
    </location>
</feature>
<feature type="sequence variant" id="VAR_062485" description="In TGD." evidence="34">
    <original>Y</original>
    <variation>C</variation>
    <location>
        <position position="482"/>
    </location>
</feature>
<feature type="sequence variant" id="VAR_062486" description="In dbSNP:rs147675550." evidence="37">
    <original>R</original>
    <variation>W</variation>
    <location>
        <position position="496"/>
    </location>
</feature>
<feature type="sequence variant" id="VAR_009146" description="In TGD; dbSNP:rs2853574." evidence="15">
    <original>R</original>
    <variation>W</variation>
    <location>
        <position position="587"/>
    </location>
</feature>
<feature type="sequence variant" id="VAR_062487" description="In TGD; dbSNP:rs137854496." evidence="28 36">
    <original>W</original>
    <variation>L</variation>
    <location>
        <position position="590"/>
    </location>
</feature>
<feature type="sequence variant" id="VAR_009147" description="In TGD; moderately decreased protein abundance; highly decreased ATPase activity; highly decreased phospholipid translocase activity; dbSNP:rs137854496." evidence="7 37 50">
    <original>W</original>
    <variation>S</variation>
    <location>
        <position position="590"/>
    </location>
</feature>
<feature type="sequence variant" id="VAR_009148" description="In TGD; dbSNP:rs2853578." evidence="6 13">
    <original>Q</original>
    <variation>R</variation>
    <location>
        <position position="597"/>
    </location>
</feature>
<feature type="sequence variant" id="VAR_062488" description="In dbSNP:rs374190304." evidence="37">
    <original>R</original>
    <variation>Q</variation>
    <location>
        <position position="638"/>
    </location>
</feature>
<feature type="sequence variant" id="VAR_009149" description="In FHA1." evidence="6 13">
    <location>
        <position position="693"/>
    </location>
</feature>
<feature type="sequence variant" id="VAR_012621" description="In dbSNP:rs2066718." evidence="14 31 36 38">
    <original>V</original>
    <variation>M</variation>
    <location>
        <position position="771"/>
    </location>
</feature>
<feature type="sequence variant" id="VAR_012622" description="In dbSNP:rs35819696." evidence="14 38">
    <original>T</original>
    <variation>P</variation>
    <location>
        <position position="774"/>
    </location>
</feature>
<feature type="sequence variant" id="VAR_062489" evidence="37">
    <original>T</original>
    <variation>S</variation>
    <location>
        <position position="774"/>
    </location>
</feature>
<feature type="sequence variant" id="VAR_012623" description="In dbSNP:rs138880920." evidence="14 38 41">
    <original>K</original>
    <variation>N</variation>
    <location>
        <position position="776"/>
    </location>
</feature>
<feature type="sequence variant" id="VAR_062490" description="In dbSNP:rs145582736." evidence="37">
    <original>E</original>
    <variation>G</variation>
    <location>
        <position position="815"/>
    </location>
</feature>
<feature type="sequence variant" id="VAR_012624" description="In dbSNP:rs2066715." evidence="12 14 30 31 38">
    <original>V</original>
    <variation>I</variation>
    <location>
        <position position="825"/>
    </location>
</feature>
<feature type="sequence variant" id="VAR_062491" description="In TGD; dbSNP:rs1322998567." evidence="36">
    <original>W</original>
    <variation>R</variation>
    <location>
        <position position="840"/>
    </location>
</feature>
<feature type="sequence variant" id="VAR_012625" description="In dbSNP:rs2066714." evidence="7 12 14 16 30 31 38">
    <original>I</original>
    <variation>M</variation>
    <location>
        <position position="883"/>
    </location>
</feature>
<feature type="sequence variant" id="VAR_035725" description="In a colorectal cancer sample; somatic mutation." evidence="42">
    <original>D</original>
    <variation>Y</variation>
    <location>
        <position position="917"/>
    </location>
</feature>
<feature type="sequence variant" id="VAR_012626" description="In TGD; moderately decreased protein abundance; highly decreased ATPase activity; highly decreased phospholipid translocase activity; loss protein subcellular localization to the plasma membrane; dbSNP:rs1832457117." evidence="13 50">
    <original>T</original>
    <variation>I</variation>
    <location>
        <position position="929"/>
    </location>
</feature>
<feature type="sequence variant" id="VAR_037968" description="In TGD; dbSNP:rs28937314." evidence="25">
    <original>N</original>
    <variation>H</variation>
    <location>
        <position position="935"/>
    </location>
</feature>
<feature type="sequence variant" id="VAR_009150" description="In TGD; moderately decreased protein abundance; highly decreased ATPase activity; highly decreased phospholipid translocase activity; dbSNP:rs28937313." evidence="7 25 50">
    <original>N</original>
    <variation>S</variation>
    <location>
        <position position="935"/>
    </location>
</feature>
<feature type="sequence variant" id="VAR_009151" description="In TGD; dbSNP:rs137854495." evidence="7">
    <original>A</original>
    <variation>V</variation>
    <location>
        <position position="937"/>
    </location>
</feature>
<feature type="sequence variant" id="VAR_012627" description="In TGD; dbSNP:rs141021096." evidence="12">
    <original>A</original>
    <variation>D</variation>
    <location>
        <position position="1046"/>
    </location>
</feature>
<feature type="sequence variant" id="VAR_037969" description="In dbSNP:rs13306072.">
    <original>V</original>
    <variation>I</variation>
    <location>
        <position position="1054"/>
    </location>
</feature>
<feature type="sequence variant" id="VAR_062492" evidence="38">
    <original>P</original>
    <variation>S</variation>
    <location>
        <position position="1065"/>
    </location>
</feature>
<feature type="sequence variant" id="VAR_062493" description="In TGD; dbSNP:rs745593394." evidence="36">
    <original>R</original>
    <variation>C</variation>
    <location>
        <position position="1068"/>
    </location>
</feature>
<feature type="sequence variant" id="VAR_012628" description="In FHA1; loss of localization to plasma membrane; decreased cholesterol efflux; decreased phospholipid efflux." evidence="9 13 48">
    <original>M</original>
    <variation>T</variation>
    <location>
        <position position="1091"/>
    </location>
</feature>
<feature type="sequence variant" id="VAR_017530" description="In FHA1; dbSNP:rs28933692." evidence="22">
    <original>D</original>
    <variation>Y</variation>
    <location>
        <position position="1099"/>
    </location>
</feature>
<feature type="sequence variant" id="VAR_012629" description="In dbSNP:rs33918808." evidence="14 16 31 38">
    <original>E</original>
    <variation>D</variation>
    <location>
        <position position="1172"/>
    </location>
</feature>
<feature type="sequence variant" id="VAR_017016" description="In dbSNP:rs76881554." evidence="31 37">
    <original>S</original>
    <variation>F</variation>
    <location>
        <position position="1181"/>
    </location>
</feature>
<feature type="sequence variant" id="VAR_062494" description="In dbSNP:rs562403512." evidence="38">
    <original>G</original>
    <variation>V</variation>
    <location>
        <position position="1216"/>
    </location>
</feature>
<feature type="sequence variant" id="VAR_009152" description="In TGD; dbSNP:rs137854500." evidence="10 20">
    <original>D</original>
    <variation>N</variation>
    <location>
        <position position="1289"/>
    </location>
</feature>
<feature type="sequence variant" id="VAR_062495" description="In dbSNP:rs147743782." evidence="37">
    <original>R</original>
    <variation>T</variation>
    <location>
        <position position="1341"/>
    </location>
</feature>
<feature type="sequence variant" id="VAR_062496" description="In dbSNP:rs145689805." evidence="37">
    <original>S</original>
    <variation>G</variation>
    <location>
        <position position="1376"/>
    </location>
</feature>
<feature type="sequence variant" id="VAR_062497" description="In TGD; the mutant protein is retained in the endoplasmic reticulum while the wild-type protein is located at the plasma membrane; dbSNP:rs1831213945." evidence="35">
    <original>L</original>
    <variation>F</variation>
    <location>
        <position position="1379"/>
    </location>
</feature>
<feature type="sequence variant" id="VAR_035726" description="In a colorectal cancer sample; somatic mutation; dbSNP:rs189206655." evidence="42">
    <original>A</original>
    <variation>T</variation>
    <location>
        <position position="1407"/>
    </location>
</feature>
<feature type="sequence variant" id="VAR_009153" description="In TGD; loss of interaction with APOE; unable to generate APOE-containing high density lipoproteins; moderately decreased protein abundance; moderately decreased ATPase activity; moderately decreased phospholipid translocase activity; dbSNP:rs137854494." evidence="6 13 33 50">
    <original>C</original>
    <variation>R</variation>
    <location>
        <position position="1477"/>
    </location>
</feature>
<feature type="sequence variant" id="VAR_012630" description="In TGD; dbSNP:rs137854497." evidence="19">
    <original>S</original>
    <variation>L</variation>
    <location>
        <position position="1506"/>
    </location>
</feature>
<feature type="sequence variant" id="VAR_009154" description="In TGD." evidence="45">
    <original>I</original>
    <variation>R</variation>
    <location>
        <position position="1517"/>
    </location>
</feature>
<feature type="sequence variant" id="VAR_012638" description="In dbSNP:rs1997618." evidence="5 8">
    <original>I</original>
    <variation>T</variation>
    <location>
        <position position="1555"/>
    </location>
</feature>
<feature type="sequence variant" id="VAR_012631" description="In dbSNP:rs2230808." evidence="5 8 11 12 14 18 31 38 54">
    <original>K</original>
    <variation>R</variation>
    <location>
        <position position="1587"/>
    </location>
</feature>
<feature type="sequence variant" id="VAR_012632" description="In FHA1; deficient cellular cholesterol efflux." evidence="21">
    <original>N</original>
    <variation>D</variation>
    <location>
        <position position="1611"/>
    </location>
</feature>
<feature type="sequence variant" id="VAR_062498" description="In dbSNP:rs1251839800." evidence="37">
    <original>R</original>
    <variation>Q</variation>
    <location>
        <position position="1615"/>
    </location>
</feature>
<feature type="sequence variant" id="VAR_012639" description="In dbSNP:rs1883024." evidence="5 8">
    <original>L</original>
    <variation>P</variation>
    <location>
        <position position="1648"/>
    </location>
</feature>
<feature type="sequence variant" id="VAR_062499" description="In dbSNP:rs1203589782." evidence="37">
    <original>A</original>
    <variation>T</variation>
    <location>
        <position position="1670"/>
    </location>
</feature>
<feature type="sequence variant" id="VAR_062500" description="In dbSNP:rs150125857." evidence="37">
    <original>R</original>
    <variation>Q</variation>
    <location>
        <position position="1680"/>
    </location>
</feature>
<feature type="sequence variant" id="VAR_037970" description="In TGD; dbSNP:rs137854498." evidence="24">
    <original>R</original>
    <variation>W</variation>
    <location>
        <position position="1680"/>
    </location>
</feature>
<feature type="sequence variant" id="VAR_062501" description="In TGD; the mutant protein is retained in the endoplasmic reticulum while the wild-type protein is located at the plasma membrane." evidence="35">
    <original>V</original>
    <variation>D</variation>
    <location>
        <position position="1704"/>
    </location>
</feature>
<feature type="sequence variant" id="VAR_012633" description="In dbSNP:rs760507032." evidence="14">
    <original>S</original>
    <variation>C</variation>
    <location>
        <position position="1731"/>
    </location>
</feature>
<feature type="sequence variant" id="VAR_009155" description="In TGD; dbSNP:rs146292819." evidence="10 34 37 38">
    <original>N</original>
    <variation>H</variation>
    <location>
        <position position="1800"/>
    </location>
</feature>
<feature type="sequence variant" id="VAR_062502" description="In TGD; dbSNP:rs1055285452." evidence="32">
    <original>R</original>
    <variation>Q</variation>
    <location>
        <position position="1851"/>
    </location>
</feature>
<feature type="sequence variant" id="VAR_012634" description="In FHA1." evidence="9 13">
    <location>
        <begin position="1893"/>
        <end position="1894"/>
    </location>
</feature>
<feature type="sequence variant" id="VAR_062503" description="In FHA1; uncertain significance; dbSNP:rs760768125." evidence="39">
    <original>R</original>
    <variation>W</variation>
    <location>
        <position position="1897"/>
    </location>
</feature>
<feature type="sequence variant" id="VAR_062504" description="In TGD." evidence="34">
    <original>R</original>
    <variation>S</variation>
    <location>
        <position position="1901"/>
    </location>
</feature>
<feature type="sequence variant" id="VAR_062505" description="In Scott syndrome; shows impaired trafficking of the mutant protein to the plasma membrane; dbSNP:rs142688906." evidence="40">
    <original>R</original>
    <variation>Q</variation>
    <location>
        <position position="1925"/>
    </location>
</feature>
<feature type="sequence variant" id="VAR_037971" description="In FHA1; dbSNP:rs137854499." evidence="22">
    <original>F</original>
    <variation>S</variation>
    <location>
        <position position="2009"/>
    </location>
</feature>
<feature type="sequence variant" id="VAR_012635" description="In TGD; highly decreased protein abundance; highly decreased ATPase activity; highly decreased phospholipid translocase activity; loss protein subcellular localization to the plasma membrane; dbSNP:rs137854501." evidence="20 50">
    <original>R</original>
    <variation>W</variation>
    <location>
        <position position="2081"/>
    </location>
</feature>
<feature type="sequence variant" id="VAR_035727" description="In a colorectal cancer sample; somatic mutation." evidence="42">
    <original>A</original>
    <variation>T</variation>
    <location>
        <position position="2109"/>
    </location>
</feature>
<feature type="sequence variant" id="VAR_012636" description="In FHA1; moderately decreased protein abundance; does not affect ATPase activity; moderately decreased phospholipid translocase activity; dbSNP:rs369098049." evidence="13 50">
    <original>P</original>
    <variation>L</variation>
    <location>
        <position position="2150"/>
    </location>
</feature>
<feature type="sequence variant" id="VAR_062506" evidence="36">
    <original>F</original>
    <variation>S</variation>
    <location>
        <position position="2163"/>
    </location>
</feature>
<feature type="sequence variant" id="VAR_012637" description="In dbSNP:rs2853577." evidence="5 8 15">
    <original>L</original>
    <variation>P</variation>
    <location>
        <position position="2168"/>
    </location>
</feature>
<feature type="sequence variant" id="VAR_062507" description="In TGD; dbSNP:rs564764153." evidence="34">
    <original>Q</original>
    <variation>H</variation>
    <location>
        <position position="2196"/>
    </location>
</feature>
<feature type="sequence variant" id="VAR_062508" description="In dbSNP:rs34879708." evidence="37">
    <original>D</original>
    <variation>E</variation>
    <location>
        <position position="2243"/>
    </location>
</feature>
<feature type="sequence variant" id="VAR_062509" description="In dbSNP:rs144588452." evidence="36">
    <original>V</original>
    <variation>I</variation>
    <location>
        <position position="2244"/>
    </location>
</feature>
<feature type="mutagenesis site" description="Mild decrease of palmitoylation. Loss of localization to plasma membrane. Decreased cholesterol efflux. Decreased phospholipid efflux. Decreased palmitoylation; when associated with S-23, S-1110 and S-1111." evidence="48">
    <original>C</original>
    <variation>S</variation>
    <location>
        <position position="3"/>
    </location>
</feature>
<feature type="mutagenesis site" description="Mild decrease of palmitoylation. Loss of localization to plasma membrane. Decreased palmitoylation; when associated with S-3, S-1110 and S-1111." evidence="48">
    <original>C</original>
    <variation>S</variation>
    <location>
        <position position="23"/>
    </location>
</feature>
<feature type="mutagenesis site" description="85-90% reduction in phospholipid and cholesterol efflux but no effect on localization to cell membrane; when associated with C-371." evidence="53">
    <original>I</original>
    <variation>C</variation>
    <location>
        <position position="74"/>
    </location>
</feature>
<feature type="mutagenesis site" description="85-90% reduction in phospholipid and cholesterol efflux but no effect on localization to cell membrane; when associated with E-371." evidence="53">
    <original>I</original>
    <variation>K</variation>
    <location>
        <position position="74"/>
    </location>
</feature>
<feature type="mutagenesis site" description="Highly decreased protein abundance. Highly decreased ATPase activity. Highly decreased phospholipid translocase activity." evidence="50">
    <original>S</original>
    <variation>C</variation>
    <location>
        <position position="100"/>
    </location>
</feature>
<feature type="mutagenesis site" description="No effect on phospholipid and cholesterol efflux or localization to cell membrane; when associated with C-308." evidence="53">
    <original>V</original>
    <variation>C</variation>
    <location>
        <position position="304"/>
    </location>
</feature>
<feature type="mutagenesis site" description="No effect on phospholipid and cholesterol efflux or localization to cell membrane; when associated with C-304." evidence="53">
    <original>V</original>
    <variation>C</variation>
    <location>
        <position position="308"/>
    </location>
</feature>
<feature type="mutagenesis site" description="No effect on phospholipid and cholesterol efflux or localization to cell membrane. 85-90% reduction in phospholipid and cholesterol efflux but no effect on localization to cell membrane; when associated with C-74 or C-375." evidence="53">
    <original>I</original>
    <variation>C</variation>
    <location>
        <position position="371"/>
    </location>
</feature>
<feature type="mutagenesis site" description="85-90% reduction in phospholipid and cholesterol efflux but no effect on localization to cell membrane; when associated with K-74." evidence="53">
    <original>I</original>
    <variation>E</variation>
    <location>
        <position position="371"/>
    </location>
</feature>
<feature type="mutagenesis site" description="85-90% reduction in phospholipid and cholesterol efflux but no effect on localization to cell membrane; when associated with C-371." evidence="53">
    <original>L</original>
    <variation>C</variation>
    <location>
        <position position="375"/>
    </location>
</feature>
<feature type="mutagenesis site" description="60-65% reduction in phospholipid and cholesterol efflux but no effect on localization to cell membrane." evidence="53">
    <original>K</original>
    <variation>A</variation>
    <location>
        <position position="568"/>
    </location>
</feature>
<feature type="mutagenesis site" description="No effect on phospholipid and cholesterol efflux and on localization to cell membrane." evidence="53">
    <original>Y</original>
    <variation>F</variation>
    <location>
        <position position="573"/>
    </location>
</feature>
<feature type="mutagenesis site" description="80-85% reduction in phospholipid and cholesterol efflux but no effect on localization to cell membrane; when associated with K-584 and K-585." evidence="53">
    <original>D</original>
    <variation>K</variation>
    <location>
        <position position="581"/>
    </location>
</feature>
<feature type="mutagenesis site" description="90-95% reduction in phospholipid and cholesterol efflux but no effect on localization to cell membrane; when associated with E-590." evidence="53">
    <original>F</original>
    <variation>K</variation>
    <location>
        <position position="583"/>
    </location>
</feature>
<feature type="mutagenesis site" description="80-85% reduction in phospholipid and cholesterol efflux but no effect on localization to cell membrane; when associated with K-581 and K-585." evidence="53">
    <original>E</original>
    <variation>K</variation>
    <location>
        <position position="584"/>
    </location>
</feature>
<feature type="mutagenesis site" description="80-85% reduction in phospholipid and cholesterol efflux but no effect on localization to cell membrane; when associated with K-581 and K-584." evidence="53">
    <original>D</original>
    <variation>K</variation>
    <location>
        <position position="585"/>
    </location>
</feature>
<feature type="mutagenesis site" description="90-95% reduction in phospholipid and cholesterol efflux but no effect on localization to cell membrane; when associated with K-583." evidence="53">
    <original>W</original>
    <variation>E</variation>
    <location>
        <position position="590"/>
    </location>
</feature>
<feature type="mutagenesis site" description="Moderately decreased protein abundance. Highly decreased ATPase activity. Highly decreased phospholipid translocase activity." evidence="50">
    <original>F</original>
    <variation>L</variation>
    <location>
        <position position="593"/>
    </location>
</feature>
<feature type="mutagenesis site" description="Inhibits ATPase activity; when associated with M-1952. Decreases translocase activity; when associated with M-1952. Does not affect protein subcellular localization in plasma membrane and endosome; when associated with M-1952." evidence="50">
    <original>K</original>
    <variation>M</variation>
    <location>
        <position position="939"/>
    </location>
</feature>
<feature type="mutagenesis site" description="Decreased palmitoylation; when associated with S-3, S-23 and S-1111." evidence="48">
    <original>C</original>
    <variation>S</variation>
    <location>
        <position position="1110"/>
    </location>
</feature>
<feature type="mutagenesis site" description="Decreased palmitoylation; when associated with S-3, S-23 and S-1110." evidence="48">
    <original>C</original>
    <variation>S</variation>
    <location>
        <position position="1111"/>
    </location>
</feature>
<feature type="mutagenesis site" description="Moderately decreased protein abundance. Does not affect ATPase activity. Moderately decreased phospholipid translocase activity." evidence="50">
    <original>T</original>
    <variation>M</variation>
    <location>
        <position position="1512"/>
    </location>
</feature>
<feature type="mutagenesis site" description="Inhibits ATPase activity; when associated with M-939. Decreases translocase activity; when associated with M-939. Does not affect protein subcellular localization in plasma membrane and endosome; when associated with M-939." evidence="50">
    <original>K</original>
    <variation>M</variation>
    <location>
        <position position="1952"/>
    </location>
</feature>
<feature type="sequence conflict" description="In Ref. 3; AAK43526." evidence="55" ref="3">
    <original>Y</original>
    <variation>C</variation>
    <location>
        <position position="793"/>
    </location>
</feature>
<feature type="sequence conflict" description="In Ref. 3; AAK43526." evidence="55" ref="3">
    <original>D</original>
    <variation>N</variation>
    <location>
        <position position="831"/>
    </location>
</feature>
<feature type="sequence conflict" description="In Ref. 3; AAK43526." evidence="55" ref="3">
    <original>E</original>
    <variation>K</variation>
    <location>
        <position position="1005"/>
    </location>
</feature>
<feature type="sequence conflict" description="In Ref. 7; AAD49852." evidence="55" ref="7">
    <location>
        <begin position="1745"/>
        <end position="1746"/>
    </location>
</feature>
<feature type="helix" evidence="61">
    <location>
        <begin position="4"/>
        <end position="20"/>
    </location>
</feature>
<feature type="helix" evidence="61">
    <location>
        <begin position="22"/>
        <end position="44"/>
    </location>
</feature>
<feature type="strand" evidence="61">
    <location>
        <begin position="58"/>
        <end position="60"/>
    </location>
</feature>
<feature type="helix" evidence="61">
    <location>
        <begin position="62"/>
        <end position="64"/>
    </location>
</feature>
<feature type="helix" evidence="61">
    <location>
        <begin position="66"/>
        <end position="75"/>
    </location>
</feature>
<feature type="helix" evidence="61">
    <location>
        <begin position="87"/>
        <end position="89"/>
    </location>
</feature>
<feature type="strand" evidence="61">
    <location>
        <begin position="90"/>
        <end position="92"/>
    </location>
</feature>
<feature type="strand" evidence="61">
    <location>
        <begin position="98"/>
        <end position="100"/>
    </location>
</feature>
<feature type="helix" evidence="61">
    <location>
        <begin position="101"/>
        <end position="117"/>
    </location>
</feature>
<feature type="helix" evidence="61">
    <location>
        <begin position="121"/>
        <end position="135"/>
    </location>
</feature>
<feature type="helix" evidence="61">
    <location>
        <begin position="200"/>
        <end position="209"/>
    </location>
</feature>
<feature type="strand" evidence="61">
    <location>
        <begin position="212"/>
        <end position="215"/>
    </location>
</feature>
<feature type="helix" evidence="61">
    <location>
        <begin position="216"/>
        <end position="226"/>
    </location>
</feature>
<feature type="helix" evidence="61">
    <location>
        <begin position="230"/>
        <end position="233"/>
    </location>
</feature>
<feature type="helix" evidence="61">
    <location>
        <begin position="236"/>
        <end position="239"/>
    </location>
</feature>
<feature type="turn" evidence="61">
    <location>
        <begin position="240"/>
        <end position="245"/>
    </location>
</feature>
<feature type="helix" evidence="61">
    <location>
        <begin position="253"/>
        <end position="274"/>
    </location>
</feature>
<feature type="helix" evidence="61">
    <location>
        <begin position="278"/>
        <end position="288"/>
    </location>
</feature>
<feature type="helix" evidence="61">
    <location>
        <begin position="299"/>
        <end position="308"/>
    </location>
</feature>
<feature type="helix" evidence="61">
    <location>
        <begin position="353"/>
        <end position="363"/>
    </location>
</feature>
<feature type="helix" evidence="61">
    <location>
        <begin position="369"/>
        <end position="379"/>
    </location>
</feature>
<feature type="strand" evidence="62">
    <location>
        <begin position="384"/>
        <end position="386"/>
    </location>
</feature>
<feature type="helix" evidence="61">
    <location>
        <begin position="390"/>
        <end position="404"/>
    </location>
</feature>
<feature type="helix" evidence="61">
    <location>
        <begin position="405"/>
        <end position="409"/>
    </location>
</feature>
<feature type="helix" evidence="61">
    <location>
        <begin position="412"/>
        <end position="416"/>
    </location>
</feature>
<feature type="helix" evidence="61">
    <location>
        <begin position="419"/>
        <end position="426"/>
    </location>
</feature>
<feature type="helix" evidence="61">
    <location>
        <begin position="431"/>
        <end position="440"/>
    </location>
</feature>
<feature type="strand" evidence="61">
    <location>
        <begin position="441"/>
        <end position="444"/>
    </location>
</feature>
<feature type="helix" evidence="61">
    <location>
        <begin position="445"/>
        <end position="453"/>
    </location>
</feature>
<feature type="helix" evidence="61">
    <location>
        <begin position="460"/>
        <end position="467"/>
    </location>
</feature>
<feature type="helix" evidence="61">
    <location>
        <begin position="484"/>
        <end position="501"/>
    </location>
</feature>
<feature type="helix" evidence="61">
    <location>
        <begin position="516"/>
        <end position="528"/>
    </location>
</feature>
<feature type="strand" evidence="61">
    <location>
        <begin position="535"/>
        <end position="537"/>
    </location>
</feature>
<feature type="strand" evidence="61">
    <location>
        <begin position="541"/>
        <end position="545"/>
    </location>
</feature>
<feature type="strand" evidence="61">
    <location>
        <begin position="550"/>
        <end position="557"/>
    </location>
</feature>
<feature type="turn" evidence="61">
    <location>
        <begin position="560"/>
        <end position="562"/>
    </location>
</feature>
<feature type="turn" evidence="61">
    <location>
        <begin position="582"/>
        <end position="585"/>
    </location>
</feature>
<feature type="helix" evidence="61">
    <location>
        <begin position="587"/>
        <end position="590"/>
    </location>
</feature>
<feature type="helix" evidence="61">
    <location>
        <begin position="593"/>
        <end position="608"/>
    </location>
</feature>
<feature type="strand" evidence="61">
    <location>
        <begin position="616"/>
        <end position="621"/>
    </location>
</feature>
<feature type="helix" evidence="61">
    <location>
        <begin position="631"/>
        <end position="643"/>
    </location>
</feature>
<feature type="helix" evidence="61">
    <location>
        <begin position="646"/>
        <end position="664"/>
    </location>
</feature>
<feature type="helix" evidence="61">
    <location>
        <begin position="667"/>
        <end position="674"/>
    </location>
</feature>
<feature type="helix" evidence="61">
    <location>
        <begin position="678"/>
        <end position="706"/>
    </location>
</feature>
<feature type="strand" evidence="61">
    <location>
        <begin position="709"/>
        <end position="713"/>
    </location>
</feature>
<feature type="helix" evidence="61">
    <location>
        <begin position="715"/>
        <end position="737"/>
    </location>
</feature>
<feature type="helix" evidence="61">
    <location>
        <begin position="743"/>
        <end position="756"/>
    </location>
</feature>
<feature type="helix" evidence="61">
    <location>
        <begin position="759"/>
        <end position="767"/>
    </location>
</feature>
<feature type="helix" evidence="62">
    <location>
        <begin position="768"/>
        <end position="770"/>
    </location>
</feature>
<feature type="helix" evidence="61">
    <location>
        <begin position="773"/>
        <end position="779"/>
    </location>
</feature>
<feature type="strand" evidence="61">
    <location>
        <begin position="782"/>
        <end position="784"/>
    </location>
</feature>
<feature type="helix" evidence="61">
    <location>
        <begin position="785"/>
        <end position="799"/>
    </location>
</feature>
<feature type="strand" evidence="61">
    <location>
        <begin position="805"/>
        <end position="808"/>
    </location>
</feature>
<feature type="helix" evidence="61">
    <location>
        <begin position="821"/>
        <end position="845"/>
    </location>
</feature>
<feature type="strand" evidence="62">
    <location>
        <begin position="849"/>
        <end position="851"/>
    </location>
</feature>
<feature type="strand" evidence="61">
    <location>
        <begin position="893"/>
        <end position="895"/>
    </location>
</feature>
<feature type="strand" evidence="61">
    <location>
        <begin position="899"/>
        <end position="906"/>
    </location>
</feature>
<feature type="turn" evidence="61">
    <location>
        <begin position="909"/>
        <end position="911"/>
    </location>
</feature>
<feature type="strand" evidence="62">
    <location>
        <begin position="920"/>
        <end position="924"/>
    </location>
</feature>
<feature type="strand" evidence="61">
    <location>
        <begin position="929"/>
        <end position="933"/>
    </location>
</feature>
<feature type="strand" evidence="61">
    <location>
        <begin position="937"/>
        <end position="939"/>
    </location>
</feature>
<feature type="helix" evidence="61">
    <location>
        <begin position="940"/>
        <end position="946"/>
    </location>
</feature>
<feature type="strand" evidence="62">
    <location>
        <begin position="948"/>
        <end position="950"/>
    </location>
</feature>
<feature type="strand" evidence="61">
    <location>
        <begin position="953"/>
        <end position="959"/>
    </location>
</feature>
<feature type="turn" evidence="61">
    <location>
        <begin position="964"/>
        <end position="966"/>
    </location>
</feature>
<feature type="helix" evidence="61">
    <location>
        <begin position="968"/>
        <end position="972"/>
    </location>
</feature>
<feature type="strand" evidence="61">
    <location>
        <begin position="975"/>
        <end position="978"/>
    </location>
</feature>
<feature type="strand" evidence="61">
    <location>
        <begin position="986"/>
        <end position="989"/>
    </location>
</feature>
<feature type="helix" evidence="61">
    <location>
        <begin position="990"/>
        <end position="999"/>
    </location>
</feature>
<feature type="turn" evidence="61">
    <location>
        <begin position="1000"/>
        <end position="1002"/>
    </location>
</feature>
<feature type="helix" evidence="61">
    <location>
        <begin position="1005"/>
        <end position="1019"/>
    </location>
</feature>
<feature type="strand" evidence="61">
    <location>
        <begin position="1023"/>
        <end position="1025"/>
    </location>
</feature>
<feature type="helix" evidence="61">
    <location>
        <begin position="1030"/>
        <end position="1032"/>
    </location>
</feature>
<feature type="helix" evidence="61">
    <location>
        <begin position="1035"/>
        <end position="1045"/>
    </location>
</feature>
<feature type="strand" evidence="61">
    <location>
        <begin position="1052"/>
        <end position="1059"/>
    </location>
</feature>
<feature type="strand" evidence="62">
    <location>
        <begin position="1060"/>
        <end position="1062"/>
    </location>
</feature>
<feature type="helix" evidence="61">
    <location>
        <begin position="1065"/>
        <end position="1077"/>
    </location>
</feature>
<feature type="strand" evidence="61">
    <location>
        <begin position="1080"/>
        <end position="1082"/>
    </location>
</feature>
<feature type="strand" evidence="61">
    <location>
        <begin position="1084"/>
        <end position="1087"/>
    </location>
</feature>
<feature type="helix" evidence="61">
    <location>
        <begin position="1091"/>
        <end position="1096"/>
    </location>
</feature>
<feature type="strand" evidence="61">
    <location>
        <begin position="1099"/>
        <end position="1105"/>
    </location>
</feature>
<feature type="strand" evidence="61">
    <location>
        <begin position="1108"/>
        <end position="1113"/>
    </location>
</feature>
<feature type="helix" evidence="61">
    <location>
        <begin position="1115"/>
        <end position="1121"/>
    </location>
</feature>
<feature type="strand" evidence="61">
    <location>
        <begin position="1126"/>
        <end position="1129"/>
    </location>
</feature>
<feature type="helix" evidence="61">
    <location>
        <begin position="1182"/>
        <end position="1190"/>
    </location>
</feature>
<feature type="strand" evidence="62">
    <location>
        <begin position="1191"/>
        <end position="1193"/>
    </location>
</feature>
<feature type="strand" evidence="61">
    <location>
        <begin position="1195"/>
        <end position="1198"/>
    </location>
</feature>
<feature type="strand" evidence="61">
    <location>
        <begin position="1200"/>
        <end position="1202"/>
    </location>
</feature>
<feature type="strand" evidence="61">
    <location>
        <begin position="1205"/>
        <end position="1208"/>
    </location>
</feature>
<feature type="strand" evidence="62">
    <location>
        <begin position="1210"/>
        <end position="1213"/>
    </location>
</feature>
<feature type="turn" evidence="62">
    <location>
        <begin position="1214"/>
        <end position="1216"/>
    </location>
</feature>
<feature type="helix" evidence="61">
    <location>
        <begin position="1218"/>
        <end position="1227"/>
    </location>
</feature>
<feature type="turn" evidence="62">
    <location>
        <begin position="1229"/>
        <end position="1231"/>
    </location>
</feature>
<feature type="strand" evidence="61">
    <location>
        <begin position="1239"/>
        <end position="1241"/>
    </location>
</feature>
<feature type="helix" evidence="61">
    <location>
        <begin position="1244"/>
        <end position="1253"/>
    </location>
</feature>
<feature type="helix" evidence="61">
    <location>
        <begin position="1322"/>
        <end position="1341"/>
    </location>
</feature>
<feature type="helix" evidence="61">
    <location>
        <begin position="1344"/>
        <end position="1350"/>
    </location>
</feature>
<feature type="helix" evidence="61">
    <location>
        <begin position="1352"/>
        <end position="1364"/>
    </location>
</feature>
<feature type="helix" evidence="62">
    <location>
        <begin position="1381"/>
        <end position="1383"/>
    </location>
</feature>
<feature type="strand" evidence="61">
    <location>
        <begin position="1384"/>
        <end position="1386"/>
    </location>
</feature>
<feature type="strand" evidence="61">
    <location>
        <begin position="1388"/>
        <end position="1393"/>
    </location>
</feature>
<feature type="strand" evidence="61">
    <location>
        <begin position="1398"/>
        <end position="1400"/>
    </location>
</feature>
<feature type="helix" evidence="61">
    <location>
        <begin position="1401"/>
        <end position="1408"/>
    </location>
</feature>
<feature type="strand" evidence="61">
    <location>
        <begin position="1414"/>
        <end position="1421"/>
    </location>
</feature>
<feature type="helix" evidence="61">
    <location>
        <begin position="1446"/>
        <end position="1449"/>
    </location>
</feature>
<feature type="strand" evidence="61">
    <location>
        <begin position="1456"/>
        <end position="1458"/>
    </location>
</feature>
<feature type="strand" evidence="61">
    <location>
        <begin position="1487"/>
        <end position="1490"/>
    </location>
</feature>
<feature type="strand" evidence="61">
    <location>
        <begin position="1492"/>
        <end position="1494"/>
    </location>
</feature>
<feature type="strand" evidence="61">
    <location>
        <begin position="1496"/>
        <end position="1499"/>
    </location>
</feature>
<feature type="helix" evidence="61">
    <location>
        <begin position="1505"/>
        <end position="1522"/>
    </location>
</feature>
<feature type="strand" evidence="61">
    <location>
        <begin position="1533"/>
        <end position="1539"/>
    </location>
</feature>
<feature type="helix" evidence="61">
    <location>
        <begin position="1548"/>
        <end position="1560"/>
    </location>
</feature>
<feature type="turn" evidence="61">
    <location>
        <begin position="1561"/>
        <end position="1563"/>
    </location>
</feature>
<feature type="turn" evidence="61">
    <location>
        <begin position="1568"/>
        <end position="1570"/>
    </location>
</feature>
<feature type="helix" evidence="61">
    <location>
        <begin position="1571"/>
        <end position="1582"/>
    </location>
</feature>
<feature type="strand" evidence="61">
    <location>
        <begin position="1587"/>
        <end position="1594"/>
    </location>
</feature>
<feature type="helix" evidence="61">
    <location>
        <begin position="1601"/>
        <end position="1617"/>
    </location>
</feature>
<feature type="strand" evidence="61">
    <location>
        <begin position="1624"/>
        <end position="1626"/>
    </location>
</feature>
<feature type="strand" evidence="61">
    <location>
        <begin position="1628"/>
        <end position="1633"/>
    </location>
</feature>
<feature type="helix" evidence="61">
    <location>
        <begin position="1644"/>
        <end position="1667"/>
    </location>
</feature>
<feature type="helix" evidence="61">
    <location>
        <begin position="1669"/>
        <end position="1671"/>
    </location>
</feature>
<feature type="helix" evidence="61">
    <location>
        <begin position="1672"/>
        <end position="1680"/>
    </location>
</feature>
<feature type="strand" evidence="61">
    <location>
        <begin position="1681"/>
        <end position="1683"/>
    </location>
</feature>
<feature type="helix" evidence="61">
    <location>
        <begin position="1684"/>
        <end position="1690"/>
    </location>
</feature>
<feature type="helix" evidence="61">
    <location>
        <begin position="1695"/>
        <end position="1723"/>
    </location>
</feature>
<feature type="turn" evidence="61">
    <location>
        <begin position="1727"/>
        <end position="1729"/>
    </location>
</feature>
<feature type="turn" evidence="61">
    <location>
        <begin position="1732"/>
        <end position="1734"/>
    </location>
</feature>
<feature type="helix" evidence="61">
    <location>
        <begin position="1735"/>
        <end position="1753"/>
    </location>
</feature>
<feature type="turn" evidence="61">
    <location>
        <begin position="1755"/>
        <end position="1759"/>
    </location>
</feature>
<feature type="helix" evidence="61">
    <location>
        <begin position="1763"/>
        <end position="1789"/>
    </location>
</feature>
<feature type="helix" evidence="61">
    <location>
        <begin position="1796"/>
        <end position="1807"/>
    </location>
</feature>
<feature type="helix" evidence="61">
    <location>
        <begin position="1811"/>
        <end position="1833"/>
    </location>
</feature>
<feature type="turn" evidence="61">
    <location>
        <begin position="1846"/>
        <end position="1848"/>
    </location>
</feature>
<feature type="helix" evidence="61">
    <location>
        <begin position="1849"/>
        <end position="1871"/>
    </location>
</feature>
<feature type="turn" evidence="61">
    <location>
        <begin position="1872"/>
        <end position="1875"/>
    </location>
</feature>
<feature type="helix" evidence="61">
    <location>
        <begin position="1893"/>
        <end position="1904"/>
    </location>
</feature>
<feature type="strand" evidence="61">
    <location>
        <begin position="1911"/>
        <end position="1919"/>
    </location>
</feature>
<feature type="turn" evidence="61">
    <location>
        <begin position="1922"/>
        <end position="1924"/>
    </location>
</feature>
<feature type="strand" evidence="61">
    <location>
        <begin position="1934"/>
        <end position="1936"/>
    </location>
</feature>
<feature type="strand" evidence="61">
    <location>
        <begin position="1940"/>
        <end position="1946"/>
    </location>
</feature>
<feature type="helix" evidence="61">
    <location>
        <begin position="1952"/>
        <end position="1960"/>
    </location>
</feature>
<feature type="strand" evidence="61">
    <location>
        <begin position="1967"/>
        <end position="1974"/>
    </location>
</feature>
<feature type="turn" evidence="61">
    <location>
        <begin position="1977"/>
        <end position="1979"/>
    </location>
</feature>
<feature type="helix" evidence="61">
    <location>
        <begin position="1981"/>
        <end position="1985"/>
    </location>
</feature>
<feature type="strand" evidence="61">
    <location>
        <begin position="1989"/>
        <end position="1991"/>
    </location>
</feature>
<feature type="helix" evidence="61">
    <location>
        <begin position="2003"/>
        <end position="2014"/>
    </location>
</feature>
<feature type="helix" evidence="61">
    <location>
        <begin position="2018"/>
        <end position="2020"/>
    </location>
</feature>
<feature type="helix" evidence="61">
    <location>
        <begin position="2021"/>
        <end position="2030"/>
    </location>
</feature>
<feature type="strand" evidence="61">
    <location>
        <begin position="2035"/>
        <end position="2037"/>
    </location>
</feature>
<feature type="strand" evidence="62">
    <location>
        <begin position="2038"/>
        <end position="2041"/>
    </location>
</feature>
<feature type="helix" evidence="61">
    <location>
        <begin position="2042"/>
        <end position="2044"/>
    </location>
</feature>
<feature type="helix" evidence="61">
    <location>
        <begin position="2047"/>
        <end position="2058"/>
    </location>
</feature>
<feature type="strand" evidence="61">
    <location>
        <begin position="2064"/>
        <end position="2070"/>
    </location>
</feature>
<feature type="strand" evidence="62">
    <location>
        <begin position="2071"/>
        <end position="2074"/>
    </location>
</feature>
<feature type="helix" evidence="61">
    <location>
        <begin position="2077"/>
        <end position="2092"/>
    </location>
</feature>
<feature type="strand" evidence="61">
    <location>
        <begin position="2096"/>
        <end position="2100"/>
    </location>
</feature>
<feature type="helix" evidence="61">
    <location>
        <begin position="2104"/>
        <end position="2109"/>
    </location>
</feature>
<feature type="strand" evidence="61">
    <location>
        <begin position="2112"/>
        <end position="2118"/>
    </location>
</feature>
<feature type="strand" evidence="61">
    <location>
        <begin position="2121"/>
        <end position="2123"/>
    </location>
</feature>
<feature type="helix" evidence="61">
    <location>
        <begin position="2128"/>
        <end position="2134"/>
    </location>
</feature>
<feature type="strand" evidence="61">
    <location>
        <begin position="2140"/>
        <end position="2144"/>
    </location>
</feature>
<feature type="helix" evidence="61">
    <location>
        <begin position="2153"/>
        <end position="2162"/>
    </location>
</feature>
<feature type="strand" evidence="61">
    <location>
        <begin position="2168"/>
        <end position="2170"/>
    </location>
</feature>
<feature type="strand" evidence="61">
    <location>
        <begin position="2173"/>
        <end position="2179"/>
    </location>
</feature>
<feature type="helix" evidence="61">
    <location>
        <begin position="2187"/>
        <end position="2196"/>
    </location>
</feature>
<feature type="turn" evidence="61">
    <location>
        <begin position="2197"/>
        <end position="2200"/>
    </location>
</feature>
<feature type="strand" evidence="61">
    <location>
        <begin position="2205"/>
        <end position="2211"/>
    </location>
</feature>
<feature type="helix" evidence="61">
    <location>
        <begin position="2213"/>
        <end position="2223"/>
    </location>
</feature>
<comment type="function">
    <text evidence="9 33 50 53">Catalyzes the translocation of specific phospholipids from the cytoplasmic to the extracellular/lumenal leaflet of membrane coupled to the hydrolysis of ATP (PubMed:24097981, PubMed:35974019). Thereby, participates in phospholipid transfer to apolipoproteins to form nascent high density lipoproteins/HDLs (PubMed:14754908). Transports preferentially phosphatidylcholine over phosphatidylserine (PubMed:24097981). May play a similar role in the efflux of intracellular cholesterol to apolipoproteins and the formation of nascent high density lipoproteins/HDLs (PubMed:10533863, PubMed:14754908, PubMed:24097981, PubMed:35974019). Translocates phospholipids from the outer face of the plasma membrane and forces it through its gateway and annulus into an elongated hydrophobic tunnel in its extracellular domain (PubMed:35974019).</text>
</comment>
<comment type="catalytic activity">
    <reaction evidence="50">
        <text>ATP + H2O + phospholipidSide 1 = ADP + phosphate + phospholipidSide 2.</text>
        <dbReference type="EC" id="7.6.2.1"/>
    </reaction>
</comment>
<comment type="catalytic activity">
    <reaction evidence="50 53">
        <text>a 1,2-diacyl-sn-glycero-3-phosphocholine(out) + ATP + H2O = a 1,2-diacyl-sn-glycero-3-phosphocholine(in) + ADP + phosphate + H(+)</text>
        <dbReference type="Rhea" id="RHEA:38583"/>
        <dbReference type="ChEBI" id="CHEBI:15377"/>
        <dbReference type="ChEBI" id="CHEBI:15378"/>
        <dbReference type="ChEBI" id="CHEBI:30616"/>
        <dbReference type="ChEBI" id="CHEBI:43474"/>
        <dbReference type="ChEBI" id="CHEBI:57643"/>
        <dbReference type="ChEBI" id="CHEBI:456216"/>
    </reaction>
    <physiologicalReaction direction="right-to-left" evidence="58">
        <dbReference type="Rhea" id="RHEA:38585"/>
    </physiologicalReaction>
</comment>
<comment type="catalytic activity">
    <reaction evidence="50">
        <text>a 1,2-diacyl-sn-glycero-3-phospho-L-serine(out) + ATP + H2O = a 1,2-diacyl-sn-glycero-3-phospho-L-serine(in) + ADP + phosphate + H(+)</text>
        <dbReference type="Rhea" id="RHEA:38567"/>
        <dbReference type="ChEBI" id="CHEBI:15377"/>
        <dbReference type="ChEBI" id="CHEBI:15378"/>
        <dbReference type="ChEBI" id="CHEBI:30616"/>
        <dbReference type="ChEBI" id="CHEBI:43474"/>
        <dbReference type="ChEBI" id="CHEBI:57262"/>
        <dbReference type="ChEBI" id="CHEBI:456216"/>
    </reaction>
    <physiologicalReaction direction="right-to-left" evidence="58">
        <dbReference type="Rhea" id="RHEA:38569"/>
    </physiologicalReaction>
</comment>
<comment type="catalytic activity">
    <reaction evidence="50">
        <text>a sphingomyelin(in) + ATP + H2O = a sphingomyelin(out) + ADP + phosphate + H(+)</text>
        <dbReference type="Rhea" id="RHEA:38903"/>
        <dbReference type="ChEBI" id="CHEBI:15377"/>
        <dbReference type="ChEBI" id="CHEBI:15378"/>
        <dbReference type="ChEBI" id="CHEBI:17636"/>
        <dbReference type="ChEBI" id="CHEBI:30616"/>
        <dbReference type="ChEBI" id="CHEBI:43474"/>
        <dbReference type="ChEBI" id="CHEBI:456216"/>
    </reaction>
    <physiologicalReaction direction="left-to-right" evidence="50">
        <dbReference type="Rhea" id="RHEA:38904"/>
    </physiologicalReaction>
</comment>
<comment type="catalytic activity">
    <reaction evidence="53 56 57 58">
        <text>cholesterol(in) + ATP + H2O = cholesterol(out) + ADP + phosphate + H(+)</text>
        <dbReference type="Rhea" id="RHEA:39051"/>
        <dbReference type="ChEBI" id="CHEBI:15377"/>
        <dbReference type="ChEBI" id="CHEBI:15378"/>
        <dbReference type="ChEBI" id="CHEBI:16113"/>
        <dbReference type="ChEBI" id="CHEBI:30616"/>
        <dbReference type="ChEBI" id="CHEBI:43474"/>
        <dbReference type="ChEBI" id="CHEBI:456216"/>
    </reaction>
    <physiologicalReaction direction="left-to-right" evidence="56 57 58">
        <dbReference type="Rhea" id="RHEA:39052"/>
    </physiologicalReaction>
</comment>
<comment type="activity regulation">
    <text evidence="50">ATPase activity is decreased by cholesterol and ceramide. ATPase activity is stimulated by phosphatidylcholine and to a lesser degree by phosphatidylserine and sphingomyelin. Phospholipid translocase activity is highly reduced by berylium fluoride and aluminum flouride and reduced by N-ethylmaleimide.</text>
</comment>
<comment type="subunit">
    <text evidence="33 43 49 52">Interacts with MEGF10 (PubMed:17205124). May interact with APOE1; functionally associated with APOE1 in the biogenesis of HDLs (PubMed:14754908). Interacts with ABCA8; this interaction potentiates cholesterol efflux (PubMed:28882873). Interacts with ABCA12 and NR1H2; this interaction is required for ABCA1 localization to the cell surface and is necessary for its normal activity and stability (PubMed:23931754).</text>
</comment>
<comment type="interaction">
    <interactant intactId="EBI-784112">
        <id>O95477</id>
    </interactant>
    <interactant intactId="EBI-9541582">
        <id>Q86UK0</id>
        <label>ABCA12</label>
    </interactant>
    <organismsDiffer>false</organismsDiffer>
    <experiments>4</experiments>
</comment>
<comment type="interaction">
    <interactant intactId="EBI-784112">
        <id>O95477</id>
    </interactant>
    <interactant intactId="EBI-701692">
        <id>P02647</id>
        <label>APOA1</label>
    </interactant>
    <organismsDiffer>false</organismsDiffer>
    <experiments>8</experiments>
</comment>
<comment type="interaction">
    <interactant intactId="EBI-784112">
        <id>O95477</id>
    </interactant>
    <interactant intactId="EBI-355947">
        <id>P27824</id>
        <label>CANX</label>
    </interactant>
    <organismsDiffer>false</organismsDiffer>
    <experiments>8</experiments>
</comment>
<comment type="interaction">
    <interactant intactId="EBI-784112">
        <id>O95477</id>
    </interactant>
    <interactant intactId="EBI-81752">
        <id>P60953</id>
        <label>CDC42</label>
    </interactant>
    <organismsDiffer>false</organismsDiffer>
    <experiments>2</experiments>
</comment>
<comment type="interaction">
    <interactant intactId="EBI-784112">
        <id>O95477</id>
    </interactant>
    <interactant intactId="EBI-717191">
        <id>Q13424</id>
        <label>SNTA1</label>
    </interactant>
    <organismsDiffer>false</organismsDiffer>
    <experiments>2</experiments>
</comment>
<comment type="interaction">
    <interactant intactId="EBI-784112">
        <id>O95477</id>
    </interactant>
    <interactant intactId="EBI-295843">
        <id>Q13884</id>
        <label>SNTB1</label>
    </interactant>
    <organismsDiffer>false</organismsDiffer>
    <experiments>3</experiments>
</comment>
<comment type="interaction">
    <interactant intactId="EBI-784112">
        <id>O95477</id>
    </interactant>
    <interactant intactId="EBI-2691717">
        <id>Q86Y82</id>
        <label>STX12</label>
    </interactant>
    <organismsDiffer>false</organismsDiffer>
    <experiments>9</experiments>
</comment>
<comment type="subcellular location">
    <subcellularLocation>
        <location evidence="47 48 50 53">Cell membrane</location>
        <topology evidence="2">Multi-pass membrane protein</topology>
    </subcellularLocation>
    <subcellularLocation>
        <location evidence="50">Endosome</location>
    </subcellularLocation>
</comment>
<comment type="tissue specificity">
    <text>Widely expressed, but most abundant in macrophages.</text>
</comment>
<comment type="induction">
    <text evidence="17 23">By bacterial lipopolysaccharides (LPS). LPS regulates expression through a liver X receptor (LXR) -independent mechanism. Repressed by ZNF202.</text>
</comment>
<comment type="domain">
    <text>Multifunctional polypeptide with two homologous halves, each containing a hydrophobic membrane-anchoring domain and an ATP binding cassette (ABC) domain.</text>
</comment>
<comment type="PTM">
    <text evidence="26">Phosphorylation on Ser-2054 regulates phospholipid efflux.</text>
</comment>
<comment type="PTM">
    <text evidence="48">Palmitoylated by ZDHHC8 (PubMed:19556522). Palmitoylation is essential for localization to the plasma membrane (PubMed:19556522).</text>
</comment>
<comment type="polymorphism">
    <text evidence="12 37 38 44">Genetic variations in ABCA1 define the high density lipoprotein cholesterol level quantitative trait locus 13 (HDLCQ13) [MIM:600046].</text>
</comment>
<comment type="disease" evidence="6 7 10 12 13 15 19 20 21 24 25 28 32 33 34 35 36 37 38 45 50">
    <disease id="DI-01742">
        <name>Tangier disease</name>
        <acronym>TGD</acronym>
        <description>An autosomal recessive disorder characterized by near absence of plasma high density lipoproteins, low serum HDL cholesterol, and massive tissue deposition of cholesterol esters. Clinical features include large yellow-orange tonsils, hepatomegaly, splenomegaly, enlarged lymph nodes, and often sensory polyneuropathy.</description>
        <dbReference type="MIM" id="205400"/>
    </disease>
    <text>The disease is caused by variants affecting the gene represented in this entry.</text>
</comment>
<comment type="disease" evidence="6 9 13 21 22 27 39 48 50">
    <disease id="DI-01743">
        <name>Hypoalphalipoproteinemia, primary, 1</name>
        <acronym>FHA1</acronym>
        <description>An autosomal dominant disorder characterized by decreased plasma high density lipoproteins, moderately low HDL cholesterol, a reduction in cellular cholesterol efflux, and susceptibility to premature coronary artery disease.</description>
        <dbReference type="MIM" id="604091"/>
    </disease>
    <text>The disease is caused by variants affecting the gene represented in this entry.</text>
</comment>
<comment type="similarity">
    <text evidence="55">Belongs to the ABC transporter superfamily. ABCA family.</text>
</comment>
<comment type="sequence caution" evidence="55">
    <conflict type="erroneous initiation">
        <sequence resource="EMBL-CDS" id="AAD49849"/>
    </conflict>
    <text>Truncated N-terminus.</text>
</comment>
<comment type="sequence caution" evidence="55">
    <conflict type="erroneous initiation">
        <sequence resource="EMBL-CDS" id="CAA10005"/>
    </conflict>
    <text>Truncated N-terminus.</text>
</comment>
<comment type="online information" name="ABCMdb">
    <link uri="http://abcm2.hegelab.org/search"/>
    <text>Database for mutations in ABC proteins</text>
</comment>
<proteinExistence type="evidence at protein level"/>
<dbReference type="EC" id="7.6.2.1" evidence="50"/>
<dbReference type="EMBL" id="AF275948">
    <property type="protein sequence ID" value="AAF86276.1"/>
    <property type="molecule type" value="Genomic_DNA"/>
</dbReference>
<dbReference type="EMBL" id="AL353685">
    <property type="status" value="NOT_ANNOTATED_CDS"/>
    <property type="molecule type" value="Genomic_DNA"/>
</dbReference>
<dbReference type="EMBL" id="AL359846">
    <property type="status" value="NOT_ANNOTATED_CDS"/>
    <property type="molecule type" value="Genomic_DNA"/>
</dbReference>
<dbReference type="EMBL" id="AF285167">
    <property type="protein sequence ID" value="AAF98175.1"/>
    <property type="molecule type" value="mRNA"/>
</dbReference>
<dbReference type="EMBL" id="AF287262">
    <property type="protein sequence ID" value="AAK43526.1"/>
    <property type="molecule type" value="Genomic_DNA"/>
</dbReference>
<dbReference type="EMBL" id="AB055982">
    <property type="protein sequence ID" value="BAB63210.1"/>
    <property type="molecule type" value="mRNA"/>
</dbReference>
<dbReference type="EMBL" id="AJ012376">
    <property type="protein sequence ID" value="CAA10005.1"/>
    <property type="status" value="ALT_INIT"/>
    <property type="molecule type" value="mRNA"/>
</dbReference>
<dbReference type="EMBL" id="AF165281">
    <property type="protein sequence ID" value="AAD49849.1"/>
    <property type="status" value="ALT_INIT"/>
    <property type="molecule type" value="mRNA"/>
</dbReference>
<dbReference type="EMBL" id="AF165286">
    <property type="protein sequence ID" value="AAD49851.1"/>
    <property type="molecule type" value="Genomic_DNA"/>
</dbReference>
<dbReference type="EMBL" id="AF165282">
    <property type="protein sequence ID" value="AAD49851.1"/>
    <property type="status" value="JOINED"/>
    <property type="molecule type" value="Genomic_DNA"/>
</dbReference>
<dbReference type="EMBL" id="AF165283">
    <property type="protein sequence ID" value="AAD49851.1"/>
    <property type="status" value="JOINED"/>
    <property type="molecule type" value="Genomic_DNA"/>
</dbReference>
<dbReference type="EMBL" id="AF165284">
    <property type="protein sequence ID" value="AAD49851.1"/>
    <property type="status" value="JOINED"/>
    <property type="molecule type" value="Genomic_DNA"/>
</dbReference>
<dbReference type="EMBL" id="AF165285">
    <property type="protein sequence ID" value="AAD49851.1"/>
    <property type="status" value="JOINED"/>
    <property type="molecule type" value="Genomic_DNA"/>
</dbReference>
<dbReference type="EMBL" id="AF165306">
    <property type="protein sequence ID" value="AAD49852.1"/>
    <property type="molecule type" value="Genomic_DNA"/>
</dbReference>
<dbReference type="EMBL" id="AF165287">
    <property type="protein sequence ID" value="AAD49852.1"/>
    <property type="status" value="JOINED"/>
    <property type="molecule type" value="Genomic_DNA"/>
</dbReference>
<dbReference type="EMBL" id="AF165288">
    <property type="protein sequence ID" value="AAD49852.1"/>
    <property type="status" value="JOINED"/>
    <property type="molecule type" value="Genomic_DNA"/>
</dbReference>
<dbReference type="EMBL" id="AF165289">
    <property type="protein sequence ID" value="AAD49852.1"/>
    <property type="status" value="JOINED"/>
    <property type="molecule type" value="Genomic_DNA"/>
</dbReference>
<dbReference type="EMBL" id="AF165290">
    <property type="protein sequence ID" value="AAD49852.1"/>
    <property type="status" value="JOINED"/>
    <property type="molecule type" value="Genomic_DNA"/>
</dbReference>
<dbReference type="EMBL" id="AF165291">
    <property type="protein sequence ID" value="AAD49852.1"/>
    <property type="status" value="JOINED"/>
    <property type="molecule type" value="Genomic_DNA"/>
</dbReference>
<dbReference type="EMBL" id="AF165292">
    <property type="protein sequence ID" value="AAD49852.1"/>
    <property type="status" value="JOINED"/>
    <property type="molecule type" value="Genomic_DNA"/>
</dbReference>
<dbReference type="EMBL" id="AF165293">
    <property type="protein sequence ID" value="AAD49852.1"/>
    <property type="status" value="JOINED"/>
    <property type="molecule type" value="Genomic_DNA"/>
</dbReference>
<dbReference type="EMBL" id="AF165294">
    <property type="protein sequence ID" value="AAD49852.1"/>
    <property type="status" value="JOINED"/>
    <property type="molecule type" value="Genomic_DNA"/>
</dbReference>
<dbReference type="EMBL" id="AF165295">
    <property type="protein sequence ID" value="AAD49852.1"/>
    <property type="status" value="JOINED"/>
    <property type="molecule type" value="Genomic_DNA"/>
</dbReference>
<dbReference type="EMBL" id="AF165296">
    <property type="protein sequence ID" value="AAD49852.1"/>
    <property type="status" value="JOINED"/>
    <property type="molecule type" value="Genomic_DNA"/>
</dbReference>
<dbReference type="EMBL" id="AF165297">
    <property type="protein sequence ID" value="AAD49852.1"/>
    <property type="status" value="JOINED"/>
    <property type="molecule type" value="Genomic_DNA"/>
</dbReference>
<dbReference type="EMBL" id="AF165298">
    <property type="protein sequence ID" value="AAD49852.1"/>
    <property type="status" value="JOINED"/>
    <property type="molecule type" value="Genomic_DNA"/>
</dbReference>
<dbReference type="EMBL" id="AF165299">
    <property type="protein sequence ID" value="AAD49852.1"/>
    <property type="status" value="JOINED"/>
    <property type="molecule type" value="Genomic_DNA"/>
</dbReference>
<dbReference type="EMBL" id="AF165300">
    <property type="protein sequence ID" value="AAD49852.1"/>
    <property type="status" value="JOINED"/>
    <property type="molecule type" value="Genomic_DNA"/>
</dbReference>
<dbReference type="EMBL" id="AF165301">
    <property type="protein sequence ID" value="AAD49852.1"/>
    <property type="status" value="JOINED"/>
    <property type="molecule type" value="Genomic_DNA"/>
</dbReference>
<dbReference type="EMBL" id="AF165302">
    <property type="protein sequence ID" value="AAD49852.1"/>
    <property type="status" value="JOINED"/>
    <property type="molecule type" value="Genomic_DNA"/>
</dbReference>
<dbReference type="EMBL" id="AF165303">
    <property type="protein sequence ID" value="AAD49852.1"/>
    <property type="status" value="JOINED"/>
    <property type="molecule type" value="Genomic_DNA"/>
</dbReference>
<dbReference type="EMBL" id="AF165304">
    <property type="protein sequence ID" value="AAD49852.1"/>
    <property type="status" value="JOINED"/>
    <property type="molecule type" value="Genomic_DNA"/>
</dbReference>
<dbReference type="EMBL" id="AF165305">
    <property type="protein sequence ID" value="AAD49852.1"/>
    <property type="status" value="JOINED"/>
    <property type="molecule type" value="Genomic_DNA"/>
</dbReference>
<dbReference type="EMBL" id="AF165309">
    <property type="protein sequence ID" value="AAD49854.1"/>
    <property type="molecule type" value="Genomic_DNA"/>
</dbReference>
<dbReference type="EMBL" id="AF165307">
    <property type="protein sequence ID" value="AAD49854.1"/>
    <property type="status" value="JOINED"/>
    <property type="molecule type" value="Genomic_DNA"/>
</dbReference>
<dbReference type="EMBL" id="AF165308">
    <property type="protein sequence ID" value="AAD49854.1"/>
    <property type="status" value="JOINED"/>
    <property type="molecule type" value="Genomic_DNA"/>
</dbReference>
<dbReference type="EMBL" id="AF165310">
    <property type="protein sequence ID" value="AAD49853.1"/>
    <property type="molecule type" value="Genomic_DNA"/>
</dbReference>
<dbReference type="CCDS" id="CCDS6762.1"/>
<dbReference type="RefSeq" id="NP_005493.2">
    <property type="nucleotide sequence ID" value="NM_005502.3"/>
</dbReference>
<dbReference type="PDB" id="5XJY">
    <property type="method" value="EM"/>
    <property type="resolution" value="4.10 A"/>
    <property type="chains" value="A=1-2261"/>
</dbReference>
<dbReference type="PDB" id="7ROQ">
    <property type="method" value="EM"/>
    <property type="resolution" value="4.10 A"/>
    <property type="chains" value="A=1-2261"/>
</dbReference>
<dbReference type="PDB" id="7TBW">
    <property type="method" value="EM"/>
    <property type="resolution" value="3.10 A"/>
    <property type="chains" value="A=1-2261"/>
</dbReference>
<dbReference type="PDB" id="7TBY">
    <property type="method" value="EM"/>
    <property type="resolution" value="4.00 A"/>
    <property type="chains" value="A=1-2261"/>
</dbReference>
<dbReference type="PDB" id="7TBZ">
    <property type="method" value="EM"/>
    <property type="resolution" value="4.30 A"/>
    <property type="chains" value="A=1-2261"/>
</dbReference>
<dbReference type="PDB" id="7TC0">
    <property type="method" value="EM"/>
    <property type="resolution" value="3.10 A"/>
    <property type="chains" value="A=1-2261"/>
</dbReference>
<dbReference type="PDB" id="7TDT">
    <property type="method" value="EM"/>
    <property type="resolution" value="4.00 A"/>
    <property type="chains" value="A=1-2261"/>
</dbReference>
<dbReference type="PDBsum" id="5XJY"/>
<dbReference type="PDBsum" id="7ROQ"/>
<dbReference type="PDBsum" id="7TBW"/>
<dbReference type="PDBsum" id="7TBY"/>
<dbReference type="PDBsum" id="7TBZ"/>
<dbReference type="PDBsum" id="7TC0"/>
<dbReference type="PDBsum" id="7TDT"/>
<dbReference type="EMDB" id="EMD-25838"/>
<dbReference type="EMDB" id="EMD-6724"/>
<dbReference type="SMR" id="O95477"/>
<dbReference type="BioGRID" id="106537">
    <property type="interactions" value="32"/>
</dbReference>
<dbReference type="CORUM" id="O95477"/>
<dbReference type="DIP" id="DIP-29211N"/>
<dbReference type="FunCoup" id="O95477">
    <property type="interactions" value="922"/>
</dbReference>
<dbReference type="IntAct" id="O95477">
    <property type="interactions" value="36"/>
</dbReference>
<dbReference type="MINT" id="O95477"/>
<dbReference type="STRING" id="9606.ENSP00000363868"/>
<dbReference type="ChEMBL" id="CHEMBL2362986"/>
<dbReference type="DrugBank" id="DB00171">
    <property type="generic name" value="ATP"/>
</dbReference>
<dbReference type="DrugBank" id="DB01016">
    <property type="generic name" value="Glyburide"/>
</dbReference>
<dbReference type="DrugBank" id="DB01599">
    <property type="generic name" value="Probucol"/>
</dbReference>
<dbReference type="DrugBank" id="DB00675">
    <property type="generic name" value="Tamoxifen"/>
</dbReference>
<dbReference type="DrugBank" id="DB11635">
    <property type="generic name" value="Tocofersolan"/>
</dbReference>
<dbReference type="DrugBank" id="DB00163">
    <property type="generic name" value="Vitamin E"/>
</dbReference>
<dbReference type="DrugCentral" id="O95477"/>
<dbReference type="SwissLipids" id="SLP:000000345"/>
<dbReference type="TCDB" id="3.A.1.211.14">
    <property type="family name" value="the atp-binding cassette (abc) superfamily"/>
</dbReference>
<dbReference type="GlyConnect" id="1020">
    <property type="glycosylation" value="1 N-Linked glycan (1 site)"/>
</dbReference>
<dbReference type="GlyCosmos" id="O95477">
    <property type="glycosylation" value="22 sites, 2 glycans"/>
</dbReference>
<dbReference type="GlyGen" id="O95477">
    <property type="glycosylation" value="23 sites, 10 N-linked glycans (9 sites), 1 O-linked glycan (1 site)"/>
</dbReference>
<dbReference type="iPTMnet" id="O95477"/>
<dbReference type="PhosphoSitePlus" id="O95477"/>
<dbReference type="SwissPalm" id="O95477"/>
<dbReference type="BioMuta" id="ABCA1"/>
<dbReference type="jPOST" id="O95477"/>
<dbReference type="MassIVE" id="O95477"/>
<dbReference type="PaxDb" id="9606-ENSP00000363868"/>
<dbReference type="PeptideAtlas" id="O95477"/>
<dbReference type="ProteomicsDB" id="50908"/>
<dbReference type="Antibodypedia" id="14760">
    <property type="antibodies" value="588 antibodies from 38 providers"/>
</dbReference>
<dbReference type="DNASU" id="19"/>
<dbReference type="Ensembl" id="ENST00000374736.8">
    <property type="protein sequence ID" value="ENSP00000363868.3"/>
    <property type="gene ID" value="ENSG00000165029.17"/>
</dbReference>
<dbReference type="GeneID" id="19"/>
<dbReference type="KEGG" id="hsa:19"/>
<dbReference type="MANE-Select" id="ENST00000374736.8">
    <property type="protein sequence ID" value="ENSP00000363868.3"/>
    <property type="RefSeq nucleotide sequence ID" value="NM_005502.4"/>
    <property type="RefSeq protein sequence ID" value="NP_005493.2"/>
</dbReference>
<dbReference type="UCSC" id="uc004bcl.4">
    <property type="organism name" value="human"/>
</dbReference>
<dbReference type="AGR" id="HGNC:29"/>
<dbReference type="CTD" id="19"/>
<dbReference type="DisGeNET" id="19"/>
<dbReference type="GeneCards" id="ABCA1"/>
<dbReference type="GeneReviews" id="ABCA1"/>
<dbReference type="HGNC" id="HGNC:29">
    <property type="gene designation" value="ABCA1"/>
</dbReference>
<dbReference type="HPA" id="ENSG00000165029">
    <property type="expression patterns" value="Low tissue specificity"/>
</dbReference>
<dbReference type="MalaCards" id="ABCA1"/>
<dbReference type="MIM" id="205400">
    <property type="type" value="phenotype"/>
</dbReference>
<dbReference type="MIM" id="600046">
    <property type="type" value="gene"/>
</dbReference>
<dbReference type="MIM" id="604091">
    <property type="type" value="phenotype"/>
</dbReference>
<dbReference type="neXtProt" id="NX_O95477"/>
<dbReference type="NIAGADS" id="ENSG00000165029"/>
<dbReference type="OpenTargets" id="ENSG00000165029"/>
<dbReference type="Orphanet" id="425">
    <property type="disease" value="Apolipoprotein A-I deficiency"/>
</dbReference>
<dbReference type="Orphanet" id="31150">
    <property type="disease" value="Tangier disease"/>
</dbReference>
<dbReference type="PharmGKB" id="PA24373"/>
<dbReference type="VEuPathDB" id="HostDB:ENSG00000165029"/>
<dbReference type="eggNOG" id="KOG0059">
    <property type="taxonomic scope" value="Eukaryota"/>
</dbReference>
<dbReference type="GeneTree" id="ENSGT00940000154658"/>
<dbReference type="HOGENOM" id="CLU_000604_19_0_1"/>
<dbReference type="InParanoid" id="O95477"/>
<dbReference type="OMA" id="AWQDYIS"/>
<dbReference type="OrthoDB" id="8061355at2759"/>
<dbReference type="PAN-GO" id="O95477">
    <property type="GO annotations" value="5 GO annotations based on evolutionary models"/>
</dbReference>
<dbReference type="PhylomeDB" id="O95477"/>
<dbReference type="TreeFam" id="TF105191"/>
<dbReference type="PathwayCommons" id="O95477"/>
<dbReference type="Reactome" id="R-HSA-1989781">
    <property type="pathway name" value="PPARA activates gene expression"/>
</dbReference>
<dbReference type="Reactome" id="R-HSA-5682113">
    <property type="pathway name" value="Defective ABCA1 causes TGD"/>
</dbReference>
<dbReference type="Reactome" id="R-HSA-8963896">
    <property type="pathway name" value="HDL assembly"/>
</dbReference>
<dbReference type="Reactome" id="R-HSA-9029569">
    <property type="pathway name" value="NR1H3 &amp; NR1H2 regulate gene expression linked to cholesterol transport and efflux"/>
</dbReference>
<dbReference type="SignaLink" id="O95477"/>
<dbReference type="SIGNOR" id="O95477"/>
<dbReference type="BioGRID-ORCS" id="19">
    <property type="hits" value="18 hits in 1162 CRISPR screens"/>
</dbReference>
<dbReference type="ChiTaRS" id="ABCA1">
    <property type="organism name" value="human"/>
</dbReference>
<dbReference type="GeneWiki" id="ABCA1"/>
<dbReference type="GenomeRNAi" id="19"/>
<dbReference type="Pharos" id="O95477">
    <property type="development level" value="Tclin"/>
</dbReference>
<dbReference type="PRO" id="PR:O95477"/>
<dbReference type="Proteomes" id="UP000005640">
    <property type="component" value="Chromosome 9"/>
</dbReference>
<dbReference type="RNAct" id="O95477">
    <property type="molecule type" value="protein"/>
</dbReference>
<dbReference type="Bgee" id="ENSG00000165029">
    <property type="expression patterns" value="Expressed in adrenal tissue and 190 other cell types or tissues"/>
</dbReference>
<dbReference type="ExpressionAtlas" id="O95477">
    <property type="expression patterns" value="baseline and differential"/>
</dbReference>
<dbReference type="GO" id="GO:0016323">
    <property type="term" value="C:basolateral plasma membrane"/>
    <property type="evidence" value="ECO:0007669"/>
    <property type="project" value="Ensembl"/>
</dbReference>
<dbReference type="GO" id="GO:0030139">
    <property type="term" value="C:endocytic vesicle"/>
    <property type="evidence" value="ECO:0000314"/>
    <property type="project" value="BHF-UCL"/>
</dbReference>
<dbReference type="GO" id="GO:0005789">
    <property type="term" value="C:endoplasmic reticulum membrane"/>
    <property type="evidence" value="ECO:0000304"/>
    <property type="project" value="Reactome"/>
</dbReference>
<dbReference type="GO" id="GO:0005768">
    <property type="term" value="C:endosome"/>
    <property type="evidence" value="ECO:0000314"/>
    <property type="project" value="UniProtKB"/>
</dbReference>
<dbReference type="GO" id="GO:0009897">
    <property type="term" value="C:external side of plasma membrane"/>
    <property type="evidence" value="ECO:0007669"/>
    <property type="project" value="Ensembl"/>
</dbReference>
<dbReference type="GO" id="GO:0005794">
    <property type="term" value="C:Golgi apparatus"/>
    <property type="evidence" value="ECO:0000314"/>
    <property type="project" value="HPA"/>
</dbReference>
<dbReference type="GO" id="GO:0043231">
    <property type="term" value="C:intracellular membrane-bounded organelle"/>
    <property type="evidence" value="ECO:0000318"/>
    <property type="project" value="GO_Central"/>
</dbReference>
<dbReference type="GO" id="GO:0097708">
    <property type="term" value="C:intracellular vesicle"/>
    <property type="evidence" value="ECO:0000314"/>
    <property type="project" value="ARUK-UCL"/>
</dbReference>
<dbReference type="GO" id="GO:0045121">
    <property type="term" value="C:membrane raft"/>
    <property type="evidence" value="ECO:0000314"/>
    <property type="project" value="BHF-UCL"/>
</dbReference>
<dbReference type="GO" id="GO:0048471">
    <property type="term" value="C:perinuclear region of cytoplasm"/>
    <property type="evidence" value="ECO:0000314"/>
    <property type="project" value="BHF-UCL"/>
</dbReference>
<dbReference type="GO" id="GO:0045335">
    <property type="term" value="C:phagocytic vesicle"/>
    <property type="evidence" value="ECO:0000314"/>
    <property type="project" value="BHF-UCL"/>
</dbReference>
<dbReference type="GO" id="GO:0005886">
    <property type="term" value="C:plasma membrane"/>
    <property type="evidence" value="ECO:0000314"/>
    <property type="project" value="UniProtKB"/>
</dbReference>
<dbReference type="GO" id="GO:0140359">
    <property type="term" value="F:ABC-type transporter activity"/>
    <property type="evidence" value="ECO:0007669"/>
    <property type="project" value="InterPro"/>
</dbReference>
<dbReference type="GO" id="GO:0034186">
    <property type="term" value="F:apolipoprotein A-I binding"/>
    <property type="evidence" value="ECO:0000353"/>
    <property type="project" value="BHF-UCL"/>
</dbReference>
<dbReference type="GO" id="GO:0034188">
    <property type="term" value="F:apolipoprotein A-I receptor activity"/>
    <property type="evidence" value="ECO:0000314"/>
    <property type="project" value="BHF-UCL"/>
</dbReference>
<dbReference type="GO" id="GO:0034185">
    <property type="term" value="F:apolipoprotein binding"/>
    <property type="evidence" value="ECO:0000353"/>
    <property type="project" value="BHF-UCL"/>
</dbReference>
<dbReference type="GO" id="GO:0005524">
    <property type="term" value="F:ATP binding"/>
    <property type="evidence" value="ECO:0000314"/>
    <property type="project" value="BHF-UCL"/>
</dbReference>
<dbReference type="GO" id="GO:0016887">
    <property type="term" value="F:ATP hydrolysis activity"/>
    <property type="evidence" value="ECO:0007669"/>
    <property type="project" value="InterPro"/>
</dbReference>
<dbReference type="GO" id="GO:0051117">
    <property type="term" value="F:ATPase binding"/>
    <property type="evidence" value="ECO:0000353"/>
    <property type="project" value="BHF-UCL"/>
</dbReference>
<dbReference type="GO" id="GO:0042626">
    <property type="term" value="F:ATPase-coupled transmembrane transporter activity"/>
    <property type="evidence" value="ECO:0000318"/>
    <property type="project" value="GO_Central"/>
</dbReference>
<dbReference type="GO" id="GO:0015485">
    <property type="term" value="F:cholesterol binding"/>
    <property type="evidence" value="ECO:0000305"/>
    <property type="project" value="BHF-UCL"/>
</dbReference>
<dbReference type="GO" id="GO:0120020">
    <property type="term" value="F:cholesterol transfer activity"/>
    <property type="evidence" value="ECO:0000314"/>
    <property type="project" value="BHF-UCL"/>
</dbReference>
<dbReference type="GO" id="GO:0140328">
    <property type="term" value="F:floppase activity"/>
    <property type="evidence" value="ECO:0000314"/>
    <property type="project" value="UniProtKB"/>
</dbReference>
<dbReference type="GO" id="GO:0008035">
    <property type="term" value="F:high-density lipoprotein particle binding"/>
    <property type="evidence" value="ECO:0007669"/>
    <property type="project" value="Ensembl"/>
</dbReference>
<dbReference type="GO" id="GO:0031210">
    <property type="term" value="F:phosphatidylcholine binding"/>
    <property type="evidence" value="ECO:0000314"/>
    <property type="project" value="BHF-UCL"/>
</dbReference>
<dbReference type="GO" id="GO:0090554">
    <property type="term" value="F:phosphatidylcholine floppase activity"/>
    <property type="evidence" value="ECO:0000314"/>
    <property type="project" value="BHF-UCL"/>
</dbReference>
<dbReference type="GO" id="GO:0090556">
    <property type="term" value="F:phosphatidylserine floppase activity"/>
    <property type="evidence" value="ECO:0000314"/>
    <property type="project" value="BHF-UCL"/>
</dbReference>
<dbReference type="GO" id="GO:0005548">
    <property type="term" value="F:phospholipid transporter activity"/>
    <property type="evidence" value="ECO:0000316"/>
    <property type="project" value="ARUK-UCL"/>
</dbReference>
<dbReference type="GO" id="GO:0008320">
    <property type="term" value="F:protein transmembrane transporter activity"/>
    <property type="evidence" value="ECO:0000250"/>
    <property type="project" value="ARUK-UCL"/>
</dbReference>
<dbReference type="GO" id="GO:0005102">
    <property type="term" value="F:signaling receptor binding"/>
    <property type="evidence" value="ECO:0000353"/>
    <property type="project" value="BHF-UCL"/>
</dbReference>
<dbReference type="GO" id="GO:0031267">
    <property type="term" value="F:small GTPase binding"/>
    <property type="evidence" value="ECO:0000353"/>
    <property type="project" value="BHF-UCL"/>
</dbReference>
<dbReference type="GO" id="GO:0046623">
    <property type="term" value="F:sphingolipid floppase activity"/>
    <property type="evidence" value="ECO:0000314"/>
    <property type="project" value="BHF-UCL"/>
</dbReference>
<dbReference type="GO" id="GO:0019905">
    <property type="term" value="F:syntaxin binding"/>
    <property type="evidence" value="ECO:0000353"/>
    <property type="project" value="BHF-UCL"/>
</dbReference>
<dbReference type="GO" id="GO:0007189">
    <property type="term" value="P:adenylate cyclase-activating G protein-coupled receptor signaling pathway"/>
    <property type="evidence" value="ECO:0000315"/>
    <property type="project" value="BHF-UCL"/>
</dbReference>
<dbReference type="GO" id="GO:0071397">
    <property type="term" value="P:cellular response to cholesterol"/>
    <property type="evidence" value="ECO:0007669"/>
    <property type="project" value="Ensembl"/>
</dbReference>
<dbReference type="GO" id="GO:0071345">
    <property type="term" value="P:cellular response to cytokine stimulus"/>
    <property type="evidence" value="ECO:0007669"/>
    <property type="project" value="Ensembl"/>
</dbReference>
<dbReference type="GO" id="GO:0071222">
    <property type="term" value="P:cellular response to lipopolysaccharide"/>
    <property type="evidence" value="ECO:0007669"/>
    <property type="project" value="Ensembl"/>
</dbReference>
<dbReference type="GO" id="GO:0071404">
    <property type="term" value="P:cellular response to low-density lipoprotein particle stimulus"/>
    <property type="evidence" value="ECO:0000303"/>
    <property type="project" value="BHF-UCL"/>
</dbReference>
<dbReference type="GO" id="GO:0071300">
    <property type="term" value="P:cellular response to retinoic acid"/>
    <property type="evidence" value="ECO:0007669"/>
    <property type="project" value="Ensembl"/>
</dbReference>
<dbReference type="GO" id="GO:0071466">
    <property type="term" value="P:cellular response to xenobiotic stimulus"/>
    <property type="evidence" value="ECO:0007669"/>
    <property type="project" value="Ensembl"/>
</dbReference>
<dbReference type="GO" id="GO:0033344">
    <property type="term" value="P:cholesterol efflux"/>
    <property type="evidence" value="ECO:0000314"/>
    <property type="project" value="BHF-UCL"/>
</dbReference>
<dbReference type="GO" id="GO:0042632">
    <property type="term" value="P:cholesterol homeostasis"/>
    <property type="evidence" value="ECO:0000314"/>
    <property type="project" value="BHF-UCL"/>
</dbReference>
<dbReference type="GO" id="GO:0008203">
    <property type="term" value="P:cholesterol metabolic process"/>
    <property type="evidence" value="ECO:0000314"/>
    <property type="project" value="BHF-UCL"/>
</dbReference>
<dbReference type="GO" id="GO:0016197">
    <property type="term" value="P:endosomal transport"/>
    <property type="evidence" value="ECO:0000314"/>
    <property type="project" value="BHF-UCL"/>
</dbReference>
<dbReference type="GO" id="GO:0140115">
    <property type="term" value="P:export across plasma membrane"/>
    <property type="evidence" value="ECO:0000250"/>
    <property type="project" value="ARUK-UCL"/>
</dbReference>
<dbReference type="GO" id="GO:0007186">
    <property type="term" value="P:G protein-coupled receptor signaling pathway"/>
    <property type="evidence" value="ECO:0000315"/>
    <property type="project" value="BHF-UCL"/>
</dbReference>
<dbReference type="GO" id="GO:0034380">
    <property type="term" value="P:high-density lipoprotein particle assembly"/>
    <property type="evidence" value="ECO:0000315"/>
    <property type="project" value="UniProtKB"/>
</dbReference>
<dbReference type="GO" id="GO:0032367">
    <property type="term" value="P:intracellular cholesterol transport"/>
    <property type="evidence" value="ECO:0000315"/>
    <property type="project" value="BHF-UCL"/>
</dbReference>
<dbReference type="GO" id="GO:0042158">
    <property type="term" value="P:lipoprotein biosynthetic process"/>
    <property type="evidence" value="ECO:0007669"/>
    <property type="project" value="Ensembl"/>
</dbReference>
<dbReference type="GO" id="GO:0007040">
    <property type="term" value="P:lysosome organization"/>
    <property type="evidence" value="ECO:0000314"/>
    <property type="project" value="BHF-UCL"/>
</dbReference>
<dbReference type="GO" id="GO:0010887">
    <property type="term" value="P:negative regulation of cholesterol storage"/>
    <property type="evidence" value="ECO:0000304"/>
    <property type="project" value="BHF-UCL"/>
</dbReference>
<dbReference type="GO" id="GO:0010745">
    <property type="term" value="P:negative regulation of macrophage derived foam cell differentiation"/>
    <property type="evidence" value="ECO:0000304"/>
    <property type="project" value="BHF-UCL"/>
</dbReference>
<dbReference type="GO" id="GO:0002790">
    <property type="term" value="P:peptide secretion"/>
    <property type="evidence" value="ECO:0007669"/>
    <property type="project" value="Ensembl"/>
</dbReference>
<dbReference type="GO" id="GO:0006911">
    <property type="term" value="P:phagocytosis, engulfment"/>
    <property type="evidence" value="ECO:0007669"/>
    <property type="project" value="Ensembl"/>
</dbReference>
<dbReference type="GO" id="GO:0033700">
    <property type="term" value="P:phospholipid efflux"/>
    <property type="evidence" value="ECO:0000314"/>
    <property type="project" value="BHF-UCL"/>
</dbReference>
<dbReference type="GO" id="GO:0055091">
    <property type="term" value="P:phospholipid homeostasis"/>
    <property type="evidence" value="ECO:0000315"/>
    <property type="project" value="BHF-UCL"/>
</dbReference>
<dbReference type="GO" id="GO:0045332">
    <property type="term" value="P:phospholipid translocation"/>
    <property type="evidence" value="ECO:0000314"/>
    <property type="project" value="BHF-UCL"/>
</dbReference>
<dbReference type="GO" id="GO:0060155">
    <property type="term" value="P:platelet dense granule organization"/>
    <property type="evidence" value="ECO:0000315"/>
    <property type="project" value="BHF-UCL"/>
</dbReference>
<dbReference type="GO" id="GO:0010875">
    <property type="term" value="P:positive regulation of cholesterol efflux"/>
    <property type="evidence" value="ECO:0007669"/>
    <property type="project" value="Ensembl"/>
</dbReference>
<dbReference type="GO" id="GO:0090108">
    <property type="term" value="P:positive regulation of high-density lipoprotein particle assembly"/>
    <property type="evidence" value="ECO:0000250"/>
    <property type="project" value="UniProtKB"/>
</dbReference>
<dbReference type="GO" id="GO:0009306">
    <property type="term" value="P:protein secretion"/>
    <property type="evidence" value="ECO:0000315"/>
    <property type="project" value="ARUK-UCL"/>
</dbReference>
<dbReference type="GO" id="GO:0071806">
    <property type="term" value="P:protein transmembrane transport"/>
    <property type="evidence" value="ECO:0000250"/>
    <property type="project" value="ARUK-UCL"/>
</dbReference>
<dbReference type="GO" id="GO:0032489">
    <property type="term" value="P:regulation of Cdc42 protein signal transduction"/>
    <property type="evidence" value="ECO:0000315"/>
    <property type="project" value="BHF-UCL"/>
</dbReference>
<dbReference type="GO" id="GO:0090107">
    <property type="term" value="P:regulation of high-density lipoprotein particle assembly"/>
    <property type="evidence" value="ECO:0000304"/>
    <property type="project" value="BHF-UCL"/>
</dbReference>
<dbReference type="GO" id="GO:0034616">
    <property type="term" value="P:response to laminar fluid shear stress"/>
    <property type="evidence" value="ECO:0000314"/>
    <property type="project" value="BHF-UCL"/>
</dbReference>
<dbReference type="GO" id="GO:0033552">
    <property type="term" value="P:response to vitamin B3"/>
    <property type="evidence" value="ECO:0007669"/>
    <property type="project" value="Ensembl"/>
</dbReference>
<dbReference type="GO" id="GO:0043691">
    <property type="term" value="P:reverse cholesterol transport"/>
    <property type="evidence" value="ECO:0000315"/>
    <property type="project" value="BHF-UCL"/>
</dbReference>
<dbReference type="GO" id="GO:0023061">
    <property type="term" value="P:signal release"/>
    <property type="evidence" value="ECO:0000315"/>
    <property type="project" value="BHF-UCL"/>
</dbReference>
<dbReference type="CDD" id="cd03263">
    <property type="entry name" value="ABC_subfamily_A"/>
    <property type="match status" value="2"/>
</dbReference>
<dbReference type="FunFam" id="3.40.50.300:FF:000232">
    <property type="entry name" value="ATP-binding cassette, sub-family A (ABC1), member 1"/>
    <property type="match status" value="1"/>
</dbReference>
<dbReference type="FunFam" id="3.40.50.300:FF:000264">
    <property type="entry name" value="ATP-binding cassette, sub-family A (ABC1), member 1"/>
    <property type="match status" value="1"/>
</dbReference>
<dbReference type="Gene3D" id="3.40.50.300">
    <property type="entry name" value="P-loop containing nucleotide triphosphate hydrolases"/>
    <property type="match status" value="2"/>
</dbReference>
<dbReference type="InterPro" id="IPR003593">
    <property type="entry name" value="AAA+_ATPase"/>
</dbReference>
<dbReference type="InterPro" id="IPR013525">
    <property type="entry name" value="ABC2_TM"/>
</dbReference>
<dbReference type="InterPro" id="IPR003439">
    <property type="entry name" value="ABC_transporter-like_ATP-bd"/>
</dbReference>
<dbReference type="InterPro" id="IPR017871">
    <property type="entry name" value="ABC_transporter-like_CS"/>
</dbReference>
<dbReference type="InterPro" id="IPR026082">
    <property type="entry name" value="ABCA"/>
</dbReference>
<dbReference type="InterPro" id="IPR027417">
    <property type="entry name" value="P-loop_NTPase"/>
</dbReference>
<dbReference type="InterPro" id="IPR056264">
    <property type="entry name" value="R2_ABCA1-4-like"/>
</dbReference>
<dbReference type="PANTHER" id="PTHR19229:SF250">
    <property type="entry name" value="ABC TRANSPORTER DOMAIN-CONTAINING PROTEIN-RELATED"/>
    <property type="match status" value="1"/>
</dbReference>
<dbReference type="PANTHER" id="PTHR19229">
    <property type="entry name" value="ATP-BINDING CASSETTE TRANSPORTER SUBFAMILY A ABCA"/>
    <property type="match status" value="1"/>
</dbReference>
<dbReference type="Pfam" id="PF12698">
    <property type="entry name" value="ABC2_membrane_3"/>
    <property type="match status" value="2"/>
</dbReference>
<dbReference type="Pfam" id="PF00005">
    <property type="entry name" value="ABC_tran"/>
    <property type="match status" value="2"/>
</dbReference>
<dbReference type="Pfam" id="PF23321">
    <property type="entry name" value="R1_ABCA1"/>
    <property type="match status" value="1"/>
</dbReference>
<dbReference type="SMART" id="SM00382">
    <property type="entry name" value="AAA"/>
    <property type="match status" value="2"/>
</dbReference>
<dbReference type="SUPFAM" id="SSF52540">
    <property type="entry name" value="P-loop containing nucleoside triphosphate hydrolases"/>
    <property type="match status" value="2"/>
</dbReference>
<dbReference type="PROSITE" id="PS00211">
    <property type="entry name" value="ABC_TRANSPORTER_1"/>
    <property type="match status" value="1"/>
</dbReference>
<dbReference type="PROSITE" id="PS50893">
    <property type="entry name" value="ABC_TRANSPORTER_2"/>
    <property type="match status" value="2"/>
</dbReference>
<reference key="1">
    <citation type="journal article" date="2000" name="Proc. Natl. Acad. Sci. U.S.A.">
        <title>Complete genomic sequence of the human ABCA1 gene: analysis of the human and mouse ATP-binding cassette A promoter.</title>
        <authorList>
            <person name="Santamarina-Fojo S."/>
            <person name="Peterson K.M."/>
            <person name="Knapper C.L."/>
            <person name="Qiu Y."/>
            <person name="Freeman L.A."/>
            <person name="Cheng J.-F."/>
            <person name="Osorio J."/>
            <person name="Remaley A.T."/>
            <person name="Yang X.-P."/>
            <person name="Haudenschild C.C."/>
            <person name="Prades C."/>
            <person name="Chimini G."/>
            <person name="Blackmon E.E."/>
            <person name="Francois T.L."/>
            <person name="Duverger N."/>
            <person name="Rubin E.M."/>
            <person name="Rosier M."/>
            <person name="Denefle P."/>
            <person name="Fredrickson D.S."/>
            <person name="Brewer H.B. Jr."/>
        </authorList>
    </citation>
    <scope>NUCLEOTIDE SEQUENCE [GENOMIC DNA / MRNA]</scope>
    <scope>VARIANT ARG-1587</scope>
</reference>
<reference key="2">
    <citation type="submission" date="2000-07" db="EMBL/GenBank/DDBJ databases">
        <title>ABCA1 gene expression and apoA-I-mediated cholesterol efflux are regulated by LXR.</title>
        <authorList>
            <person name="Schwartz K."/>
            <person name="Lawn R.M."/>
            <person name="Wade D.P."/>
        </authorList>
    </citation>
    <scope>NUCLEOTIDE SEQUENCE [MRNA]</scope>
    <scope>VARIANT ARG-1587</scope>
    <source>
        <tissue>Skin</tissue>
    </source>
</reference>
<reference key="3">
    <citation type="journal article" date="2001" name="Genomics">
        <title>Human and mouse ABCA1 comparative sequencing and transgenesis studies revealing novel regulatory sequences.</title>
        <authorList>
            <person name="Qiu Y."/>
            <person name="Cavelier L."/>
            <person name="Chiu S."/>
            <person name="Yang X."/>
            <person name="Rubin E."/>
            <person name="Cheng J.-F."/>
        </authorList>
    </citation>
    <scope>NUCLEOTIDE SEQUENCE [GENOMIC DNA]</scope>
    <scope>VARIANT ARG-1587</scope>
</reference>
<reference key="4">
    <citation type="submission" date="2001-02" db="EMBL/GenBank/DDBJ databases">
        <title>A new topological model of functional human ABCA1-signal peptide cleavage and glycosylation of a large extracellular domain.</title>
        <authorList>
            <person name="Tanaka A.R."/>
            <person name="Abe-Dohmae S."/>
            <person name="Arakawa R."/>
            <person name="Sadanami K."/>
            <person name="Kidera A."/>
            <person name="Kioka N."/>
            <person name="Amachi T."/>
            <person name="Yokoyama S."/>
            <person name="Ueda K."/>
        </authorList>
    </citation>
    <scope>NUCLEOTIDE SEQUENCE [MRNA]</scope>
</reference>
<reference key="5">
    <citation type="journal article" date="2004" name="Nature">
        <title>DNA sequence and analysis of human chromosome 9.</title>
        <authorList>
            <person name="Humphray S.J."/>
            <person name="Oliver K."/>
            <person name="Hunt A.R."/>
            <person name="Plumb R.W."/>
            <person name="Loveland J.E."/>
            <person name="Howe K.L."/>
            <person name="Andrews T.D."/>
            <person name="Searle S."/>
            <person name="Hunt S.E."/>
            <person name="Scott C.E."/>
            <person name="Jones M.C."/>
            <person name="Ainscough R."/>
            <person name="Almeida J.P."/>
            <person name="Ambrose K.D."/>
            <person name="Ashwell R.I.S."/>
            <person name="Babbage A.K."/>
            <person name="Babbage S."/>
            <person name="Bagguley C.L."/>
            <person name="Bailey J."/>
            <person name="Banerjee R."/>
            <person name="Barker D.J."/>
            <person name="Barlow K.F."/>
            <person name="Bates K."/>
            <person name="Beasley H."/>
            <person name="Beasley O."/>
            <person name="Bird C.P."/>
            <person name="Bray-Allen S."/>
            <person name="Brown A.J."/>
            <person name="Brown J.Y."/>
            <person name="Burford D."/>
            <person name="Burrill W."/>
            <person name="Burton J."/>
            <person name="Carder C."/>
            <person name="Carter N.P."/>
            <person name="Chapman J.C."/>
            <person name="Chen Y."/>
            <person name="Clarke G."/>
            <person name="Clark S.Y."/>
            <person name="Clee C.M."/>
            <person name="Clegg S."/>
            <person name="Collier R.E."/>
            <person name="Corby N."/>
            <person name="Crosier M."/>
            <person name="Cummings A.T."/>
            <person name="Davies J."/>
            <person name="Dhami P."/>
            <person name="Dunn M."/>
            <person name="Dutta I."/>
            <person name="Dyer L.W."/>
            <person name="Earthrowl M.E."/>
            <person name="Faulkner L."/>
            <person name="Fleming C.J."/>
            <person name="Frankish A."/>
            <person name="Frankland J.A."/>
            <person name="French L."/>
            <person name="Fricker D.G."/>
            <person name="Garner P."/>
            <person name="Garnett J."/>
            <person name="Ghori J."/>
            <person name="Gilbert J.G.R."/>
            <person name="Glison C."/>
            <person name="Grafham D.V."/>
            <person name="Gribble S."/>
            <person name="Griffiths C."/>
            <person name="Griffiths-Jones S."/>
            <person name="Grocock R."/>
            <person name="Guy J."/>
            <person name="Hall R.E."/>
            <person name="Hammond S."/>
            <person name="Harley J.L."/>
            <person name="Harrison E.S.I."/>
            <person name="Hart E.A."/>
            <person name="Heath P.D."/>
            <person name="Henderson C.D."/>
            <person name="Hopkins B.L."/>
            <person name="Howard P.J."/>
            <person name="Howden P.J."/>
            <person name="Huckle E."/>
            <person name="Johnson C."/>
            <person name="Johnson D."/>
            <person name="Joy A.A."/>
            <person name="Kay M."/>
            <person name="Keenan S."/>
            <person name="Kershaw J.K."/>
            <person name="Kimberley A.M."/>
            <person name="King A."/>
            <person name="Knights A."/>
            <person name="Laird G.K."/>
            <person name="Langford C."/>
            <person name="Lawlor S."/>
            <person name="Leongamornlert D.A."/>
            <person name="Leversha M."/>
            <person name="Lloyd C."/>
            <person name="Lloyd D.M."/>
            <person name="Lovell J."/>
            <person name="Martin S."/>
            <person name="Mashreghi-Mohammadi M."/>
            <person name="Matthews L."/>
            <person name="McLaren S."/>
            <person name="McLay K.E."/>
            <person name="McMurray A."/>
            <person name="Milne S."/>
            <person name="Nickerson T."/>
            <person name="Nisbett J."/>
            <person name="Nordsiek G."/>
            <person name="Pearce A.V."/>
            <person name="Peck A.I."/>
            <person name="Porter K.M."/>
            <person name="Pandian R."/>
            <person name="Pelan S."/>
            <person name="Phillimore B."/>
            <person name="Povey S."/>
            <person name="Ramsey Y."/>
            <person name="Rand V."/>
            <person name="Scharfe M."/>
            <person name="Sehra H.K."/>
            <person name="Shownkeen R."/>
            <person name="Sims S.K."/>
            <person name="Skuce C.D."/>
            <person name="Smith M."/>
            <person name="Steward C.A."/>
            <person name="Swarbreck D."/>
            <person name="Sycamore N."/>
            <person name="Tester J."/>
            <person name="Thorpe A."/>
            <person name="Tracey A."/>
            <person name="Tromans A."/>
            <person name="Thomas D.W."/>
            <person name="Wall M."/>
            <person name="Wallis J.M."/>
            <person name="West A.P."/>
            <person name="Whitehead S.L."/>
            <person name="Willey D.L."/>
            <person name="Williams S.A."/>
            <person name="Wilming L."/>
            <person name="Wray P.W."/>
            <person name="Young L."/>
            <person name="Ashurst J.L."/>
            <person name="Coulson A."/>
            <person name="Blocker H."/>
            <person name="Durbin R.M."/>
            <person name="Sulston J.E."/>
            <person name="Hubbard T."/>
            <person name="Jackson M.J."/>
            <person name="Bentley D.R."/>
            <person name="Beck S."/>
            <person name="Rogers J."/>
            <person name="Dunham I."/>
        </authorList>
    </citation>
    <scope>NUCLEOTIDE SEQUENCE [LARGE SCALE GENOMIC DNA]</scope>
</reference>
<reference key="6">
    <citation type="journal article" date="1999" name="Biochem. Biophys. Res. Commun.">
        <title>Molecular cloning of the human ATP-binding cassette transporter 1 (hABC1): evidence for sterol-dependent regulation in macrophages.</title>
        <authorList>
            <person name="Langmann T."/>
            <person name="Klucken J."/>
            <person name="Reil M."/>
            <person name="Liebisch G."/>
            <person name="Luciani M.-F."/>
            <person name="Chimini G."/>
            <person name="Kaminski W.E."/>
            <person name="Schmitz G."/>
        </authorList>
    </citation>
    <scope>NUCLEOTIDE SEQUENCE [MRNA] OF 21-2261</scope>
    <scope>VARIANTS THR-1555; ARG-1587; PRO-1648 AND PRO-2168</scope>
</reference>
<reference key="7">
    <citation type="journal article" date="1999" name="Nat. Genet.">
        <title>Tangier disease is caused by mutations in the gene encoding ATP-binding cassette transporter 1.</title>
        <authorList>
            <person name="Rust S."/>
            <person name="Rosier M."/>
            <person name="Funke H."/>
            <person name="Real J."/>
            <person name="Amoura Z."/>
            <person name="Piette J.-C."/>
            <person name="Deleuze J.-F."/>
            <person name="Brewer H.B. Jr."/>
            <person name="Duverger N."/>
            <person name="Denefle P."/>
            <person name="Assmann G."/>
        </authorList>
    </citation>
    <scope>NUCLEOTIDE SEQUENCE [GENOMIC DNA / MRNA] OF 21-2261</scope>
    <scope>VARIANTS THR-1555; ARG-1587; PRO-1648 AND PRO-2168</scope>
</reference>
<reference key="8">
    <citation type="journal article" date="2002" name="J. Biol. Chem.">
        <title>Protein kinase A site-specific phosphorylation regulates ATP-binding cassette A1 (ABCA1)-mediated phospholipid efflux.</title>
        <authorList>
            <person name="See R.H."/>
            <person name="Caday-Malcolm R.A."/>
            <person name="Singaraja R.R."/>
            <person name="Zhou S."/>
            <person name="Silverston A."/>
            <person name="Huber M.T."/>
            <person name="Moran J."/>
            <person name="James E.R."/>
            <person name="Janoo R."/>
            <person name="Savill J.M."/>
            <person name="Rigot V."/>
            <person name="Zhang L.H."/>
            <person name="Wang M."/>
            <person name="Chimini G."/>
            <person name="Wellington C.L."/>
            <person name="Tafuri S.R."/>
            <person name="Hayden M.R."/>
        </authorList>
    </citation>
    <scope>PHOSPHORYLATION AT SER-1042 AND SER-2054</scope>
</reference>
<reference key="9">
    <citation type="journal article" date="2001" name="J. Biol. Chem.">
        <title>The zinc finger protein 202 (ZNF202) is a transcriptional repressor of ATP binding cassette transporter A1 (ABCA1) and ABCG1 gene expression and a modulator of cellular lipid efflux.</title>
        <authorList>
            <person name="Porsch-Oezcueruemez M."/>
            <person name="Langmann T."/>
            <person name="Heimerl S."/>
            <person name="Borsukova H."/>
            <person name="Kaminski W.E."/>
            <person name="Drobnik W."/>
            <person name="Honer C."/>
            <person name="Schumacher C."/>
            <person name="Schmitz G."/>
        </authorList>
    </citation>
    <scope>REPRESSION BY ZNF202</scope>
</reference>
<reference key="10">
    <citation type="journal article" date="2002" name="J. Lipid Res.">
        <title>Bacterial lipopolysaccharide induces expression of ABCA1 but not ABCG1 via an LXR-independent pathway.</title>
        <authorList>
            <person name="Kaplan R."/>
            <person name="Gan X."/>
            <person name="Menke J.G."/>
            <person name="Wright S.D."/>
            <person name="Cai T.-Q."/>
        </authorList>
    </citation>
    <scope>INDUCTION BY LPS</scope>
</reference>
<reference key="11">
    <citation type="journal article" date="2006" name="PLoS ONE">
        <title>Cooperation between engulfment receptors: the case of ABCA1 and MEGF10.</title>
        <authorList>
            <person name="Hamon Y."/>
            <person name="Trompier D."/>
            <person name="Ma Z."/>
            <person name="Venegas V."/>
            <person name="Pophillat M."/>
            <person name="Mignotte V."/>
            <person name="Zhou Z."/>
            <person name="Chimini G."/>
        </authorList>
    </citation>
    <scope>INTERACTION WITH MEGF10</scope>
</reference>
<reference key="12">
    <citation type="journal article" date="2013" name="Cell Metab.">
        <title>ABCA12 regulates ABCA1-dependent cholesterol efflux from macrophages and the development of atherosclerosis.</title>
        <authorList>
            <person name="Fu Y."/>
            <person name="Mukhamedova N."/>
            <person name="Ip S."/>
            <person name="D'Souza W."/>
            <person name="Henley K.J."/>
            <person name="DiTommaso T."/>
            <person name="Kesani R."/>
            <person name="Ditiatkovski M."/>
            <person name="Jones L."/>
            <person name="Lane R.M."/>
            <person name="Jennings G."/>
            <person name="Smyth I.M."/>
            <person name="Kile B.T."/>
            <person name="Sviridov D."/>
        </authorList>
    </citation>
    <scope>INTERACTION WITH ABCA12 AND NR1H2</scope>
</reference>
<reference key="13">
    <citation type="journal article" date="2003" name="Arterioscler. Thromb. Vasc. Biol.">
        <title>Efflux and atherosclerosis: the clinical and biochemical impact of variations in the ABCA1 gene.</title>
        <authorList>
            <person name="Singaraja R.R."/>
            <person name="Brunham L.R."/>
            <person name="Visscher H."/>
            <person name="Kastelein J.J.P."/>
            <person name="Hayden M.R."/>
        </authorList>
    </citation>
    <scope>REVIEW ON VARIANTS</scope>
</reference>
<reference key="14">
    <citation type="journal article" date="2008" name="N. Engl. J. Med.">
        <title>Polymorphisms associated with cholesterol and risk of cardiovascular events.</title>
        <authorList>
            <person name="Kathiresan S."/>
            <person name="Melander O."/>
            <person name="Anevski D."/>
            <person name="Guiducci C."/>
            <person name="Burtt N.P."/>
            <person name="Roos C."/>
            <person name="Hirschhorn J.N."/>
            <person name="Berglund G."/>
            <person name="Hedblad B."/>
            <person name="Groop L."/>
            <person name="Altshuler D.M."/>
            <person name="Newton-Cheh C."/>
            <person name="Orho-Melander M."/>
        </authorList>
    </citation>
    <scope>POLYMORPHISM</scope>
    <scope>INVOLVEMENT IN HDLCQ13</scope>
</reference>
<reference key="15">
    <citation type="journal article" date="2009" name="Circ. Res.">
        <title>Palmitoylation of ATP-binding cassette transporter A1 is essential for its trafficking and function.</title>
        <authorList>
            <person name="Singaraja R.R."/>
            <person name="Kang M.H."/>
            <person name="Vaid K."/>
            <person name="Sanders S.S."/>
            <person name="Vilas G.L."/>
            <person name="Arstikaitis P."/>
            <person name="Coutinho J."/>
            <person name="Drisdel R.C."/>
            <person name="El-Husseini Ael D."/>
            <person name="Green W.N."/>
            <person name="Berthiaume L."/>
            <person name="Hayden M.R."/>
        </authorList>
    </citation>
    <scope>PALMITOYLATION AT CYS-3; CYS-23; CYS-1110 AND CYS-1111</scope>
    <scope>SUBCELLULAR LOCATION</scope>
    <scope>MUTAGENESIS OF CYS-3; CYS-23; CYS-1110 AND CYS-1111</scope>
    <scope>CHARACTERIZATION OF VARIANT FHA1 THR-1091</scope>
</reference>
<reference key="16">
    <citation type="journal article" date="2009" name="J. Biol. Chem.">
        <title>Formation of two intramolecular disulfide bonds is necessary for ApoA-I-dependent cholesterol efflux mediated by ABCA1.</title>
        <authorList>
            <person name="Hozoji M."/>
            <person name="Kimura Y."/>
            <person name="Kioka N."/>
            <person name="Ueda K."/>
        </authorList>
    </citation>
    <scope>DISULFIDE BONDS</scope>
    <scope>SUBCELLULAR LOCATION</scope>
    <scope>TOPOLOGY</scope>
</reference>
<reference key="17">
    <citation type="journal article" date="2009" name="J. Proteome Res.">
        <title>Glycoproteomics analysis of human liver tissue by combination of multiple enzyme digestion and hydrazide chemistry.</title>
        <authorList>
            <person name="Chen R."/>
            <person name="Jiang X."/>
            <person name="Sun D."/>
            <person name="Han G."/>
            <person name="Wang F."/>
            <person name="Ye M."/>
            <person name="Wang L."/>
            <person name="Zou H."/>
        </authorList>
    </citation>
    <scope>GLYCOSYLATION [LARGE SCALE ANALYSIS] AT ASN-98 AND ASN-244</scope>
    <source>
        <tissue>Liver</tissue>
    </source>
</reference>
<reference key="18">
    <citation type="journal article" date="2013" name="J. Biol. Chem.">
        <title>Differential phospholipid substrates and directional transport by ATP-binding cassette proteins ABCA1, ABCA7, and ABCA4 and disease-causing mutants.</title>
        <authorList>
            <person name="Quazi F."/>
            <person name="Molday R.S."/>
        </authorList>
    </citation>
    <scope>CATALYTIC ACTIVITY</scope>
    <scope>ACTIVITY REGULATION</scope>
    <scope>MUTAGENESIS OF SER-100; PHE-593; LYS-939; THR-1512 AND LYS-1952</scope>
    <scope>FUNCTION</scope>
    <scope>VARIANTS TGD SER-590; ILE-929; SER-935; ARG-1477 AND TRP-2081</scope>
    <scope>CHARACTERIZATION OF VARIANTS TGD SER-590; ILE-929; SER-935; ARG-1477 AND TRP-2081</scope>
    <scope>VARIANT FHA1 LEU-2150</scope>
    <scope>CHARACTERIZATION OF VARIANT FHA1 LEU-2150</scope>
    <scope>SUBCELLULAR LOCATION</scope>
</reference>
<reference key="19">
    <citation type="journal article" date="2014" name="J. Proteomics">
        <title>An enzyme assisted RP-RPLC approach for in-depth analysis of human liver phosphoproteome.</title>
        <authorList>
            <person name="Bian Y."/>
            <person name="Song C."/>
            <person name="Cheng K."/>
            <person name="Dong M."/>
            <person name="Wang F."/>
            <person name="Huang J."/>
            <person name="Sun D."/>
            <person name="Wang L."/>
            <person name="Ye M."/>
            <person name="Zou H."/>
        </authorList>
    </citation>
    <scope>IDENTIFICATION BY MASS SPECTROMETRY [LARGE SCALE ANALYSIS]</scope>
    <source>
        <tissue>Liver</tissue>
    </source>
</reference>
<reference key="20">
    <citation type="journal article" date="2004" name="J. Lipid Res.">
        <title>Molecular interactions between apoE and ABCA1: impact on apoE lipidation.</title>
        <authorList>
            <person name="Krimbou L."/>
            <person name="Denis M."/>
            <person name="Haidar B."/>
            <person name="Carrier M."/>
            <person name="Marcil M."/>
            <person name="Genest J. Jr."/>
        </authorList>
    </citation>
    <scope>FUNCTION</scope>
    <scope>INTERACTION WITH APOE</scope>
    <scope>CHARACTERIZATION OF VARIANT TGD ARG-1477</scope>
</reference>
<reference key="21">
    <citation type="journal article" date="2017" name="Arterioscler. Thromb. Vasc. Biol.">
        <title>ABCA8 Regulates Cholesterol Efflux and High-Density Lipoprotein Cholesterol Levels.</title>
        <authorList>
            <person name="Trigueros-Motos L."/>
            <person name="van Capelleveen J.C."/>
            <person name="Torta F."/>
            <person name="Castano D."/>
            <person name="Zhang L.H."/>
            <person name="Chai E.C."/>
            <person name="Kang M."/>
            <person name="Dimova L.G."/>
            <person name="Schimmel A.W.M."/>
            <person name="Tietjen I."/>
            <person name="Radomski C."/>
            <person name="Tan L.J."/>
            <person name="Thiam C.H."/>
            <person name="Narayanaswamy P."/>
            <person name="Wu D.H."/>
            <person name="Dorninger F."/>
            <person name="Yakala G.K."/>
            <person name="Barhdadi A."/>
            <person name="Angeli V."/>
            <person name="Dube M.P."/>
            <person name="Berger J."/>
            <person name="Dallinga-Thie G.M."/>
            <person name="Tietge U.J.F."/>
            <person name="Wenk M.R."/>
            <person name="Hayden M.R."/>
            <person name="Hovingh G.K."/>
            <person name="Singaraja R.R."/>
        </authorList>
    </citation>
    <scope>INTERACTION WITH ABCA8</scope>
</reference>
<reference key="22">
    <citation type="journal article" date="2022" name="Nat. Commun.">
        <title>ABCA1 is an extracellular phospholipid translocase.</title>
        <authorList>
            <person name="Segrest J.P."/>
            <person name="Tang C."/>
            <person name="Song H.D."/>
            <person name="Jones M.K."/>
            <person name="Davidson W.S."/>
            <person name="Aller S.G."/>
            <person name="Heinecke J.W."/>
        </authorList>
    </citation>
    <scope>FUNCTION</scope>
    <scope>CATALYTIC ACTIVITY</scope>
    <scope>SUBCELLULAR LOCATION</scope>
    <scope>REGION GATEWAY DOMAIN</scope>
    <scope>REGION ANNULUS DOMAINS</scope>
    <scope>MUTAGENESIS OF ILE-74; VAL-304; VAL-308; ILE-371; LEU-375; LYS-568; TYR-573; ASP-581; PHE-583; GLU-584; ASP-585 AND TRP-590</scope>
</reference>
<reference key="23">
    <citation type="journal article" date="1999" name="Lancet">
        <title>Mutations in the ABC1 gene in familial HDL deficiency with defective cholesterol efflux.</title>
        <authorList>
            <person name="Marcil M."/>
            <person name="Brooks-Wilson A."/>
            <person name="Clee S.M."/>
            <person name="Roomp K."/>
            <person name="Zhang L.-H."/>
            <person name="Yu L."/>
            <person name="Collins J.A."/>
            <person name="van Dam M."/>
            <person name="Molhuizen H.O.F."/>
            <person name="Loubser O."/>
            <person name="Ouellette B.F.F."/>
            <person name="Sensen C.W."/>
            <person name="Fichter K."/>
            <person name="Mott S."/>
            <person name="Denis M."/>
            <person name="Boucher B."/>
            <person name="Pimstone S."/>
            <person name="Genest J. Jr."/>
            <person name="Kastelein J.J.P."/>
            <person name="Hayden M.R."/>
        </authorList>
    </citation>
    <scope>VARIANTS FHA1 THR-1091 AND 1893-GLU-ASP-1894 DEL</scope>
    <scope>FUNCTION</scope>
</reference>
<reference key="24">
    <citation type="journal article" date="1999" name="Nat. Genet.">
        <title>Mutations in ABC1 in Tangier disease and familial high-density lipoprotein deficiency.</title>
        <authorList>
            <person name="Brooks-Wilson A."/>
            <person name="Marcil M."/>
            <person name="Clee S.M."/>
            <person name="Zhang L.-H."/>
            <person name="Roomp K."/>
            <person name="van Dam M."/>
            <person name="Yu L."/>
            <person name="Brewer C."/>
            <person name="Collins J.A."/>
            <person name="Molhuizen H.O.F."/>
            <person name="Loubser O."/>
            <person name="Ouelette B.F.F."/>
            <person name="Fichter K."/>
            <person name="Ashbourne-Excoffon K.J.D."/>
            <person name="Sensen C.W."/>
            <person name="Scherer S."/>
            <person name="Mott S."/>
            <person name="Denis M."/>
            <person name="Martindale D."/>
            <person name="Frohlich J."/>
            <person name="Morgan K."/>
            <person name="Koop B."/>
            <person name="Pimstone S."/>
            <person name="Kastelein J.J.P."/>
            <person name="Hayden M.R."/>
        </authorList>
    </citation>
    <scope>VARIANTS TGD ARG-597 AND ARG-1477</scope>
    <scope>VARIANT FHA1 LEU-693 DEL</scope>
</reference>
<reference key="25">
    <citation type="journal article" date="1999" name="Nat. Genet.">
        <title>The gene encoding ATP-binding cassette transporter 1 is mutated in Tangier disease.</title>
        <authorList>
            <person name="Bodzioch M."/>
            <person name="Orso E."/>
            <person name="Klucken J."/>
            <person name="Langmann T."/>
            <person name="Boettcher A."/>
            <person name="Diederich W."/>
            <person name="Drobnik W."/>
            <person name="Barlage S."/>
            <person name="Buechler C."/>
            <person name="Porsch-Oezcueruemez M."/>
            <person name="Kaminski W.E."/>
            <person name="Hahmann H.W."/>
            <person name="Oette K."/>
            <person name="Rothe G."/>
            <person name="Aslanidis C."/>
            <person name="Lackner K.J."/>
            <person name="Schmitz G."/>
        </authorList>
    </citation>
    <scope>VARIANTS TGD SER-590; SER-935 AND VAL-937</scope>
    <scope>VARIANTS ALA-399 AND MET-883</scope>
</reference>
<reference key="26">
    <citation type="journal article" date="2000" name="J. Clin. Invest.">
        <title>Age and residual cholesterol efflux affect HDL cholesterol levels and coronary artery disease in ABCA1 heterozygotes.</title>
        <authorList>
            <person name="Clee S.M."/>
            <person name="Kastelein J.J.P."/>
            <person name="van Dam M."/>
            <person name="Marcil M."/>
            <person name="Roomp K."/>
            <person name="Zwarts K.Y."/>
            <person name="Collins J.A."/>
            <person name="Roelants R."/>
            <person name="Tamasawa N."/>
            <person name="Stulc T."/>
            <person name="Suda T."/>
            <person name="Ceska R."/>
            <person name="Boucher B."/>
            <person name="Rondeau C."/>
            <person name="DeSouich C."/>
            <person name="Brooks-Wilson A."/>
            <person name="Molhuizen H.O.F."/>
            <person name="Frohlich J."/>
            <person name="Genest J. Jr."/>
            <person name="Hayden M.R."/>
        </authorList>
    </citation>
    <scope>VARIANTS TGD ARG-597; ILE-929 AND ARG-1477</scope>
    <scope>VARIANTS FHA1 LEU-693 DEL; THR-1091; 1893-GLU-ASP-1894 DEL AND LEU-2150</scope>
</reference>
<reference key="27">
    <citation type="journal article" date="2000" name="J. Lipid Res.">
        <title>Novel mutations in the gene encoding ATP-binding cassette 1 in four tangier disease kindreds.</title>
        <authorList>
            <person name="Brousseau M.E."/>
            <person name="Schaefer E.J."/>
            <person name="Dupuis J."/>
            <person name="Eustace B."/>
            <person name="Van Eerdewegh P."/>
            <person name="Goldkamp A.L."/>
            <person name="Thurston L.M."/>
            <person name="FitzGerald M.G."/>
            <person name="Yasek-McKenna D."/>
            <person name="O'Neill G."/>
            <person name="Eberhart G.P."/>
            <person name="Weiffenbach B."/>
            <person name="Ordovas J.M."/>
            <person name="Freeman M.W."/>
            <person name="Brown R.H. Jr."/>
            <person name="Gu J.Z."/>
        </authorList>
    </citation>
    <scope>VARIANTS TGD ASN-1289 AND HIS-1800</scope>
</reference>
<reference key="28">
    <citation type="journal article" date="2000" name="Arterioscler. Thromb. Vasc. Biol.">
        <title>Common and rare ABCA1 variants affecting plasma HDL cholesterol.</title>
        <authorList>
            <person name="Wang J."/>
            <person name="Burnett J.R."/>
            <person name="Near S."/>
            <person name="Young K."/>
            <person name="Zinman B."/>
            <person name="Hanley A.J.G."/>
            <person name="Connelly P.W."/>
            <person name="Harris S.B."/>
            <person name="Hegele R.A."/>
        </authorList>
    </citation>
    <scope>VARIANT TGD ASP-1046</scope>
    <scope>VARIANTS LYS-219; CYS-230; ILE-825; MET-883 AND ARG-1587</scope>
    <scope>INVOLVEMENT IN HDLCQ13</scope>
</reference>
<reference key="29">
    <citation type="journal article" date="2001" name="Atherosclerosis">
        <title>A point mutation in ABC1 gene in a patient with severe premature coronary heart disease and mild clinical phenotype of Tangier disease.</title>
        <authorList>
            <person name="Bertolini S."/>
            <person name="Pisciotta L."/>
            <person name="Seri M."/>
            <person name="Cusano R."/>
            <person name="Cantafora A."/>
            <person name="Calabresi L."/>
            <person name="Franceschini G."/>
            <person name="Ravazzolo R."/>
            <person name="Calandra S."/>
        </authorList>
    </citation>
    <scope>VARIANT TGD TRP-587</scope>
    <scope>VARIANT PRO-2168</scope>
</reference>
<reference key="30">
    <citation type="journal article" date="2001" name="Atherosclerosis">
        <title>Common variants in the gene encoding ATP-binding cassette transporter 1 in men with low HDL cholesterol levels and coronary heart disease.</title>
        <authorList>
            <person name="Brousseau M.E."/>
            <person name="Bodzioch M."/>
            <person name="Schaefer E.J."/>
            <person name="Goldkamp A.L."/>
            <person name="Kielar D."/>
            <person name="Probst M."/>
            <person name="Ordovas J.M."/>
            <person name="Aslanidis C."/>
            <person name="Lackner K.J."/>
            <person name="Bloomfield Rubins H."/>
            <person name="Collins D."/>
            <person name="Robins S.J."/>
            <person name="Wilson P.W.F."/>
            <person name="Schmitz G."/>
        </authorList>
    </citation>
    <scope>VARIANTS LYS-219; MET-883 AND ASP-1172</scope>
</reference>
<reference key="31">
    <citation type="journal article" date="2001" name="Biochim. Biophys. Acta">
        <title>Homogeneous assay based on 52 primer sets to scan for mutations of the ABCA1 gene and its application in genetic analysis of a new patient with familial high-density lipoprotein deficiency syndrome.</title>
        <authorList>
            <person name="Lapicka-Bodzioch K."/>
            <person name="Bodzioch M."/>
            <person name="Kruell M."/>
            <person name="Kielar D."/>
            <person name="Probst M."/>
            <person name="Kiec B."/>
            <person name="Andrikovics H."/>
            <person name="Boettcher A."/>
            <person name="Hubacek J."/>
            <person name="Aslanidis C."/>
            <person name="Suttorp N."/>
            <person name="Schmitz G."/>
        </authorList>
    </citation>
    <scope>VARIANT TGD LEU-1506</scope>
</reference>
<reference key="32">
    <citation type="journal article" date="2001" name="Biochim. Biophys. Acta">
        <title>Novel mutations in ABCA1 gene in Japanese patients with Tangier disease and familial high density lipoprotein deficiency with coronary heart disease.</title>
        <authorList>
            <person name="Huang W."/>
            <person name="Moriyama K."/>
            <person name="Koga T."/>
            <person name="Hua H."/>
            <person name="Ageta M."/>
            <person name="Kawabata S."/>
            <person name="Mawatari K."/>
            <person name="Imamura T."/>
            <person name="Eto T."/>
            <person name="Kawamura M."/>
            <person name="Teramoto T."/>
            <person name="Sasaki J."/>
        </authorList>
    </citation>
    <scope>VARIANTS TGD ASN-1289 AND TRP-2081</scope>
    <scope>VARIANT LYS-219</scope>
</reference>
<reference key="33">
    <citation type="journal article" date="2001" name="Circulation">
        <title>Common genetic variation in ABCA1 is associated with altered lipoprotein levels and a modified risk for coronary artery disease.</title>
        <authorList>
            <person name="Clee S.M."/>
            <person name="Zwinderman A.H."/>
            <person name="Engert J.C."/>
            <person name="Zwarts K.Y."/>
            <person name="Molhuizen H.O.F."/>
            <person name="Roomp K."/>
            <person name="Jukema J.W."/>
            <person name="van Wijland M."/>
            <person name="van Dam M."/>
            <person name="Hudson T.J."/>
            <person name="Brooks-Wilson A."/>
            <person name="Genest J. Jr."/>
            <person name="Kastelein J.J.P."/>
            <person name="Hayden M.R."/>
        </authorList>
    </citation>
    <scope>VARIANTS LYS-219; ALA-399; MET-771; PRO-774; ASN-776; ILE-825; MET-883; ASP-1172; ARG-1587 AND CYS-1731</scope>
</reference>
<reference key="34">
    <citation type="journal article" date="2002" name="Atherosclerosis">
        <title>ABCA1(Alabama): a novel variant associated with HDL deficiency and premature coronary artery disease.</title>
        <authorList>
            <person name="Hong S.H."/>
            <person name="Rhyne J."/>
            <person name="Zeller K."/>
            <person name="Miller M."/>
        </authorList>
    </citation>
    <scope>VARIANT FHA1 LEU-85</scope>
</reference>
<reference key="35">
    <citation type="journal article" date="2002" name="Biochim. Biophys. Acta">
        <title>Novel ABCA1 compound variant associated with HDL cholesterol deficiency.</title>
        <authorList>
            <person name="Hong S.H."/>
            <person name="Rhyne J."/>
            <person name="Zeller K."/>
            <person name="Miller M."/>
        </authorList>
    </citation>
    <scope>VARIANTS FHA1 TYR-1099 AND SER-2009</scope>
</reference>
<reference key="36">
    <citation type="journal article" date="2002" name="Biochem. Biophys. Res. Commun.">
        <title>Expression and functional analyses of novel mutations of ATP-binding cassette transporter-1 in Japanese patients with high-density lipoprotein deficiency.</title>
        <authorList>
            <person name="Nishida Y."/>
            <person name="Hirano K."/>
            <person name="Tsukamoto K."/>
            <person name="Nagano M."/>
            <person name="Ikegami C."/>
            <person name="Roomp K."/>
            <person name="Ishihara M."/>
            <person name="Sakane N."/>
            <person name="Zhang Z."/>
            <person name="Tsujii K."/>
            <person name="Matsuyama A."/>
            <person name="Ohama T."/>
            <person name="Matsuura F."/>
            <person name="Ishigami M."/>
            <person name="Sakai N."/>
            <person name="Hiraoka H."/>
            <person name="Hattori H."/>
            <person name="Wellington C."/>
            <person name="Yoshida Y."/>
            <person name="Misugi S."/>
            <person name="Hayden M.R."/>
            <person name="Egashira T."/>
            <person name="Yamashita S."/>
            <person name="Matsuzawa Y."/>
        </authorList>
    </citation>
    <scope>VARIANT TGD THR-255</scope>
    <scope>VARIANT FHA1 ASP-1611</scope>
</reference>
<reference key="37">
    <citation type="journal article" date="2002" name="Clin. Chem.">
        <title>Lack of association between increased carotid intima-media thickening and decreased HDL-cholesterol in a family with a novel ABCA1 variant, G2265T.</title>
        <authorList>
            <person name="Hong S.H."/>
            <person name="Riley W."/>
            <person name="Rhyne J."/>
            <person name="Friel G."/>
            <person name="Miller M."/>
        </authorList>
    </citation>
    <scope>VARIANT TGD LEU-590</scope>
</reference>
<reference key="38">
    <citation type="journal article" date="2002" name="J. Hum. Genet.">
        <title>Double deletions and missense mutations in the first nucleotide-binding fold of the ATP-binding cassette transporter A1 (ABCA1) gene in Japanese patients with Tangier disease.</title>
        <authorList>
            <person name="Guo Z."/>
            <person name="Inazu A."/>
            <person name="Yu W."/>
            <person name="Suzumura T."/>
            <person name="Okamoto M."/>
            <person name="Nohara A."/>
            <person name="Higashikata T."/>
            <person name="Sano R."/>
            <person name="Wakasugi K."/>
            <person name="Hayakawa T."/>
            <person name="Yoshida K."/>
            <person name="Suehiro T."/>
            <person name="Schmitz G."/>
            <person name="Mabuchi H."/>
        </authorList>
    </citation>
    <scope>VARIANTS TGD HIS-935 AND SER-935</scope>
</reference>
<reference key="39">
    <citation type="journal article" date="2002" name="J. Hum. Genet.">
        <title>Clinical variant of Tangier disease in Japan: mutation of the ABCA1 gene in hypoalphalipoproteinemia with corneal lipidosis.</title>
        <authorList>
            <person name="Ishii J."/>
            <person name="Nagano M."/>
            <person name="Kujiraoka T."/>
            <person name="Ishihara M."/>
            <person name="Egashira T."/>
            <person name="Takada D."/>
            <person name="Tsuji M."/>
            <person name="Hattori H."/>
            <person name="Emi M."/>
        </authorList>
    </citation>
    <scope>VARIANT TGD TRP-1680</scope>
</reference>
<reference key="40">
    <citation type="journal article" date="2003" name="Circ. Res.">
        <title>Novel polypyrimidine variation (IVS46: del T -39._.-46) in ABCA1 causes exon skipping and contributes to HDL cholesterol deficiency in a family with premature coronary disease.</title>
        <authorList>
            <person name="Hong S.H."/>
            <person name="Rhyne J."/>
            <person name="Miller M."/>
        </authorList>
    </citation>
    <scope>VARIANT TGD GLN-1851</scope>
</reference>
<reference key="41">
    <citation type="journal article" date="2003" name="Hum. Genet.">
        <title>ABCA1 gene polymorphisms and their associations with coronary artery disease and plasma lipids in males from three ethnic populations in Singapore.</title>
        <authorList>
            <person name="Tan J.H."/>
            <person name="Low P.S."/>
            <person name="Tan Y.S."/>
            <person name="Tong M.C."/>
            <person name="Saha N."/>
            <person name="Yang H."/>
            <person name="Heng C.K."/>
        </authorList>
    </citation>
    <scope>VARIANTS ILE-825 AND MET-883</scope>
</reference>
<reference key="42">
    <citation type="journal article" date="2003" name="Hum. Mol. Genet.">
        <title>Association of extreme blood lipid profile phenotypic variation with 11 reverse cholesterol transport genes and 10 non-genetic cardiovascular disease risk factors.</title>
        <authorList>
            <person name="Morabia A."/>
            <person name="Cayanis E."/>
            <person name="Costanza M.C."/>
            <person name="Ross B.M."/>
            <person name="Flaherty M.S."/>
            <person name="Alvin G.B."/>
            <person name="Das K."/>
            <person name="Gilliam T.C."/>
        </authorList>
    </citation>
    <scope>VARIANTS LYS-219; MET-771; ILE-825; MET-883; ASP-1172; PHE-1181 AND ARG-1587</scope>
</reference>
<reference key="43">
    <citation type="journal article" date="2003" name="J. Med. Genet.">
        <title>A common variant in the ABCA1 gene is associated with a lower risk for premature coronary heart disease in familial hypercholesterolaemia.</title>
        <authorList>
            <person name="Cenarro A."/>
            <person name="Artieda M."/>
            <person name="Castillo S."/>
            <person name="Mozas P."/>
            <person name="Reyes G."/>
            <person name="Tejedor D."/>
            <person name="Alonso R."/>
            <person name="Mata P."/>
            <person name="Pocovi M."/>
            <person name="Civeira F."/>
        </authorList>
    </citation>
    <scope>VARIANT LYS-219</scope>
</reference>
<reference key="44">
    <citation type="journal article" date="2004" name="Atherosclerosis">
        <title>Screening for functional sequence variations and mutations in ABCA1.</title>
        <authorList>
            <person name="Probst M.C."/>
            <person name="Thumann H."/>
            <person name="Aslanidis C."/>
            <person name="Langmann T."/>
            <person name="Buechler C."/>
            <person name="Patsch W."/>
            <person name="Baralle F.E."/>
            <person name="Dallinga-Thie G.M."/>
            <person name="Geisel J."/>
            <person name="Keller C."/>
            <person name="Menys V.C."/>
            <person name="Schmitz G."/>
        </authorList>
    </citation>
    <scope>VARIANTS TGD LEU-590; ARG-840 AND CYS-1068</scope>
    <scope>VARIANTS MET-771; SER-2163 AND ILE-2244</scope>
</reference>
<reference key="45">
    <citation type="journal article" date="2004" name="Atherosclerosis">
        <title>Familial HDL deficiency due to ABCA1 gene mutations with or without other genetic lipoprotein disorders.</title>
        <authorList>
            <person name="Pisciotta L."/>
            <person name="Hamilton-Craig I."/>
            <person name="Tarugi P."/>
            <person name="Bellocchio A."/>
            <person name="Fasano T."/>
            <person name="Alessandrini P."/>
            <person name="Bon G.B."/>
            <person name="Siepi D."/>
            <person name="Mannarino E."/>
            <person name="Cattin L."/>
            <person name="Averna M."/>
            <person name="Cefalu A.B."/>
            <person name="Cantafora A."/>
            <person name="Calandra S."/>
            <person name="Bertolini S."/>
        </authorList>
    </citation>
    <scope>VARIANTS TGD LYS-284; CYS-482; HIS-1800; SER-1901 AND HIS-2196</scope>
</reference>
<reference key="46">
    <citation type="journal article" date="2004" name="Biochim. Biophys. Acta">
        <title>Two novel missense mutations in ABCA1 result in altered trafficking and cause severe autosomal recessive HDL deficiency.</title>
        <authorList>
            <person name="Albrecht C."/>
            <person name="Baynes K."/>
            <person name="Sardini A."/>
            <person name="Schepelmann S."/>
            <person name="Eden E.R."/>
            <person name="Davies S.W."/>
            <person name="Higgins C.F."/>
            <person name="Feher M.D."/>
            <person name="Owen J.S."/>
            <person name="Soutar A.K."/>
        </authorList>
    </citation>
    <scope>VARIANTS TGD PHE-1379 AND ASP-1704</scope>
    <scope>CHARACTERIZATION OF VARIANTS TGD PHE-1379 AND ASP-1704</scope>
</reference>
<reference key="47">
    <citation type="journal article" date="2004" name="J. Clin. Invest.">
        <title>Genetic variation in ABC transporter A1 contributes to HDL cholesterol in the general population.</title>
        <authorList>
            <person name="Frikke-Schmidt R."/>
            <person name="Nordestgaard B.G."/>
            <person name="Jensen G.B."/>
            <person name="Tybjaerg-Hansen A."/>
        </authorList>
    </citation>
    <scope>VARIANT TGD HIS-1800</scope>
    <scope>VARIANTS LYS-219; CYS-364; MET-771; PRO-774; ASN-776; ILE-825; MET-883; SER-1065; ASP-1172; VAL-1216 AND ARG-1587</scope>
    <scope>INVOLVEMENT IN HDLCQ13</scope>
</reference>
<reference key="48">
    <citation type="journal article" date="2004" name="Science">
        <title>Multiple rare alleles contribute to low plasma levels of HDL cholesterol.</title>
        <authorList>
            <person name="Cohen J.C."/>
            <person name="Kiss R.S."/>
            <person name="Pertsemlidis A."/>
            <person name="Marcel Y.L."/>
            <person name="McPherson R."/>
            <person name="Hobbs H.H."/>
        </authorList>
    </citation>
    <scope>VARIANT TGD HIS-1800</scope>
    <scope>VARIANTS ALA-248; GLN-401; TRP-496; SER-590; GLN-638; SER-774; GLY-815; PHE-1181; THR-1341; GLY-1376; GLN-1615; THR-1670; GLN-1680 AND GLU-2243</scope>
    <scope>INVOLVEMENT IN HDLCQ13</scope>
</reference>
<reference key="49">
    <citation type="journal article" date="2005" name="Blood">
        <title>A novel missense mutation in ABCA1 results in altered protein trafficking and reduced phosphatidylserine translocation in a patient with Scott syndrome.</title>
        <authorList>
            <person name="Albrecht C."/>
            <person name="McVey J.H."/>
            <person name="Elliott J.I."/>
            <person name="Sardini A."/>
            <person name="Kasza I."/>
            <person name="Mumford A.D."/>
            <person name="Naoumova R.P."/>
            <person name="Tuddenham E.G."/>
            <person name="Szabo K."/>
            <person name="Higgins C.F."/>
        </authorList>
    </citation>
    <scope>VARIANT SCOTT SYNDROME GLN-1925</scope>
    <scope>CHARACTERIZATION OF VARIANT SCOTT SYNDROME GLN-1925</scope>
</reference>
<reference key="50">
    <citation type="journal article" date="2005" name="J. Am. Coll. Cardiol.">
        <title>Mutation in ABCA1 predicted risk of ischemic heart disease in the Copenhagen City Heart Study Population.</title>
        <authorList>
            <person name="Frikke-Schmidt R."/>
            <person name="Nordestgaard B.G."/>
            <person name="Schnohr P."/>
            <person name="Steffensen R."/>
            <person name="Tybjaerg-Hansen A."/>
        </authorList>
    </citation>
    <scope>VARIANT ASN-776</scope>
</reference>
<reference key="51">
    <citation type="journal article" date="2005" name="J. Lipid Res.">
        <title>Denaturing high-performance liquid chromatography in the detection of ABCA1 gene mutations in familial HDL deficiency.</title>
        <authorList>
            <person name="Fasano T."/>
            <person name="Bocchi L."/>
            <person name="Pisciotta L."/>
            <person name="Bertolini S."/>
            <person name="Calandra S."/>
        </authorList>
    </citation>
    <scope>VARIANT FHA1 TRP-1897</scope>
</reference>
<reference key="52">
    <citation type="journal article" date="2006" name="Science">
        <title>The consensus coding sequences of human breast and colorectal cancers.</title>
        <authorList>
            <person name="Sjoeblom T."/>
            <person name="Jones S."/>
            <person name="Wood L.D."/>
            <person name="Parsons D.W."/>
            <person name="Lin J."/>
            <person name="Barber T.D."/>
            <person name="Mandelker D."/>
            <person name="Leary R.J."/>
            <person name="Ptak J."/>
            <person name="Silliman N."/>
            <person name="Szabo S."/>
            <person name="Buckhaults P."/>
            <person name="Farrell C."/>
            <person name="Meeh P."/>
            <person name="Markowitz S.D."/>
            <person name="Willis J."/>
            <person name="Dawson D."/>
            <person name="Willson J.K.V."/>
            <person name="Gazdar A.F."/>
            <person name="Hartigan J."/>
            <person name="Wu L."/>
            <person name="Liu C."/>
            <person name="Parmigiani G."/>
            <person name="Park B.H."/>
            <person name="Bachman K.E."/>
            <person name="Papadopoulos N."/>
            <person name="Vogelstein B."/>
            <person name="Kinzler K.W."/>
            <person name="Velculescu V.E."/>
        </authorList>
    </citation>
    <scope>VARIANTS [LARGE SCALE ANALYSIS] ASP-210; TYR-917; THR-1407 AND THR-2109</scope>
</reference>
<reference key="53">
    <citation type="journal article" date="2009" name="J. Lipid Res.">
        <title>ABCA1 mutants reveal an interdependency between lipid export function, apoA-I binding activity, and Janus kinase 2 activation.</title>
        <authorList>
            <person name="Vaughan A.M."/>
            <person name="Tang C."/>
            <person name="Oram J.F."/>
        </authorList>
    </citation>
    <scope>VARIANT TGD ARG-1517</scope>
</reference>
<reference key="54">
    <citation type="journal article" date="2016" name="Nature">
        <title>Analysis of protein-coding genetic variation in 60,706 humans.</title>
        <authorList>
            <consortium name="Exome Aggregation Consortium"/>
            <person name="Lek M."/>
            <person name="Karczewski K.J."/>
            <person name="Minikel E.V."/>
            <person name="Samocha K.E."/>
            <person name="Banks E."/>
            <person name="Fennell T."/>
            <person name="O'Donnell-Luria A.H."/>
            <person name="Ware J.S."/>
            <person name="Hill A.J."/>
            <person name="Cummings B.B."/>
            <person name="Tukiainen T."/>
            <person name="Birnbaum D.P."/>
            <person name="Kosmicki J.A."/>
            <person name="Duncan L.E."/>
            <person name="Estrada K."/>
            <person name="Zhao F."/>
            <person name="Zou J."/>
            <person name="Pierce-Hoffman E."/>
            <person name="Berghout J."/>
            <person name="Cooper D.N."/>
            <person name="Deflaux N."/>
            <person name="DePristo M."/>
            <person name="Do R."/>
            <person name="Flannick J."/>
            <person name="Fromer M."/>
            <person name="Gauthier L."/>
            <person name="Goldstein J."/>
            <person name="Gupta N."/>
            <person name="Howrigan D."/>
            <person name="Kiezun A."/>
            <person name="Kurki M.I."/>
            <person name="Moonshine A.L."/>
            <person name="Natarajan P."/>
            <person name="Orozco L."/>
            <person name="Peloso G.M."/>
            <person name="Poplin R."/>
            <person name="Rivas M.A."/>
            <person name="Ruano-Rubio V."/>
            <person name="Rose S.A."/>
            <person name="Ruderfer D.M."/>
            <person name="Shakir K."/>
            <person name="Stenson P.D."/>
            <person name="Stevens C."/>
            <person name="Thomas B.P."/>
            <person name="Tiao G."/>
            <person name="Tusie-Luna M.T."/>
            <person name="Weisburd B."/>
            <person name="Won H.H."/>
            <person name="Yu D."/>
            <person name="Altshuler D.M."/>
            <person name="Ardissino D."/>
            <person name="Boehnke M."/>
            <person name="Danesh J."/>
            <person name="Donnelly S."/>
            <person name="Elosua R."/>
            <person name="Florez J.C."/>
            <person name="Gabriel S.B."/>
            <person name="Getz G."/>
            <person name="Glatt S.J."/>
            <person name="Hultman C.M."/>
            <person name="Kathiresan S."/>
            <person name="Laakso M."/>
            <person name="McCarroll S."/>
            <person name="McCarthy M.I."/>
            <person name="McGovern D."/>
            <person name="McPherson R."/>
            <person name="Neale B.M."/>
            <person name="Palotie A."/>
            <person name="Purcell S.M."/>
            <person name="Saleheen D."/>
            <person name="Scharf J.M."/>
            <person name="Sklar P."/>
            <person name="Sullivan P.F."/>
            <person name="Tuomilehto J."/>
            <person name="Tsuang M.T."/>
            <person name="Watkins H.C."/>
            <person name="Wilson J.G."/>
            <person name="Daly M.J."/>
            <person name="MacArthur D.G."/>
        </authorList>
    </citation>
    <scope>VARIANT CYS-230</scope>
</reference>
<accession>O95477</accession>
<accession>Q5VX33</accession>
<accession>Q96S56</accession>
<accession>Q96T85</accession>
<accession>Q9NQV4</accession>
<accession>Q9UN06</accession>
<accession>Q9UN07</accession>
<accession>Q9UN08</accession>
<accession>Q9UN09</accession>
<gene>
    <name evidence="60" type="primary">ABCA1</name>
    <name type="synonym">ABC1</name>
    <name type="synonym">CERP</name>
</gene>
<name>ABCA1_HUMAN</name>
<keyword id="KW-0002">3D-structure</keyword>
<keyword id="KW-0065">Atherosclerosis</keyword>
<keyword id="KW-0067">ATP-binding</keyword>
<keyword id="KW-1003">Cell membrane</keyword>
<keyword id="KW-0153">Cholesterol metabolism</keyword>
<keyword id="KW-0225">Disease variant</keyword>
<keyword id="KW-1015">Disulfide bond</keyword>
<keyword id="KW-0967">Endosome</keyword>
<keyword id="KW-0325">Glycoprotein</keyword>
<keyword id="KW-0443">Lipid metabolism</keyword>
<keyword id="KW-0449">Lipoprotein</keyword>
<keyword id="KW-0472">Membrane</keyword>
<keyword id="KW-0547">Nucleotide-binding</keyword>
<keyword id="KW-0564">Palmitate</keyword>
<keyword id="KW-0597">Phosphoprotein</keyword>
<keyword id="KW-1267">Proteomics identification</keyword>
<keyword id="KW-1185">Reference proteome</keyword>
<keyword id="KW-0677">Repeat</keyword>
<keyword id="KW-0753">Steroid metabolism</keyword>
<keyword id="KW-1207">Sterol metabolism</keyword>
<keyword id="KW-1278">Translocase</keyword>
<keyword id="KW-0812">Transmembrane</keyword>
<keyword id="KW-1133">Transmembrane helix</keyword>
<keyword id="KW-0813">Transport</keyword>
<sequence>MACWPQLRLLLWKNLTFRRRQTCQLLLEVAWPLFIFLILISVRLSYPPYEQHECHFPNKAMPSAGTLPWVQGIICNANNPCFRYPTPGEAPGVVGNFNKSIVARLFSDARRLLLYSQKDTSMKDMRKVLRTLQQIKKSSSNLKLQDFLVDNETFSGFLYHNLSLPKSTVDKMLRADVILHKVFLQGYQLHLTSLCNGSKSEEMIQLGDQEVSELCGLPREKLAAAERVLRSNMDILKPILRTLNSTSPFPSKELAEATKTLLHSLGTLAQELFSMRSWSDMRQEVMFLTNVNSSSSSTQIYQAVSRIVCGHPEGGGLKIKSLNWYEDNNYKALFGGNGTEEDAETFYDNSTTPYCNDLMKNLESSPLSRIIWKALKPLLVGKILYTPDTPATRQVMAEVNKTFQELAVFHDLEGMWEELSPKIWTFMENSQEMDLVRMLLDSRDNDHFWEQQLDGLDWTAQDIVAFLAKHPEDVQSSNGSVYTWREAFNETNQAIRTISRFMECVNLNKLEPIATEVWLINKSMELLDERKFWAGIVFTGITPGSIELPHHVKYKIRMDIDNVERTNKIKDGYWDPGPRADPFEDMRYVWGGFAYLQDVVEQAIIRVLTGTEKKTGVYMQQMPYPCYVDDIFLRVMSRSMPLFMTLAWIYSVAVIIKGIVYEKEARLKETMRIMGLDNSILWFSWFISSLIPLLVSAGLLVVILKLGNLLPYSDPSVVFVFLSVFAVVTILQCFLISTLFSRANLAAACGGIIYFTLYLPYVLCVAWQDYVGFTLKIFASLLSPVAFGFGCEYFALFEEQGIGVQWDNLFESPVEEDGFNLTTSVSMMLFDTFLYGVMTWYIEAVFPGQYGIPRPWYFPCTKSYWFGEESDEKSHPGSNQKRISEICMEEEPTHLKLGVSIQNLVKVYRDGMKVAVDGLALNFYEGQITSFLGHNGAGKTTTMSILTGLFPPTSGTAYILGKDIRSEMSTIRQNLGVCPQHNVLFDMLTVEEHIWFYARLKGLSEKHVKAEMEQMALDVGLPSSKLKSKTSQLSGGMQRKLSVALAFVGGSKVVILDEPTAGVDPYSRRGIWELLLKYRQGRTIILSTHHMDEADVLGDRIAIISHGKLCCVGSSLFLKNQLGTGYYLTLVKKDVESSLSSCRNSSSTVSYLKKEDSVSQSSSDAGLGSDHESDTLTIDVSAISNLIRKHVSEARLVEDIGHELTYVLPYEAAKEGAFVELFHEIDDRLSDLGISSYGISETTLEEIFLKVAEESGVDAETSDGTLPARRNRRAFGDKQSCLRPFTEDDAADPNDSDIDPESRETDLLSGMDGKGSYQVKGWKLTQQQFVALLWKRLLIARRSRKGFFAQIVLPAVFVCIALVFSLIVPPFGKYPSLELQPWMYNEQYTFVSNDAPEDTGTLELLNALTKDPGFGTRCMEGNPIPDTPCQAGEEEWTTAPVPQTIMDLFQNGNWTMQNPSPACQCSSDKIKKMLPVCPPGAGGLPPPQRKQNTADILQDLTGRNISDYLVKTYVQIIAKSLKNKIWVNEFRYGGFSLGVSNTQALPPSQEVNDAIKQMKKHLKLAKDSSADRFLNSLGRFMTGLDTKNNVKVWFNNKGWHAISSFLNVINNAILRANLQKGENPSHYGITAFNHPLNLTKQQLSEVALMTTSVDVLVSICVIFAMSFVPASFVVFLIQERVSKAKHLQFISGVKPVIYWLSNFVWDMCNYVVPATLVIIIFICFQQKSYVSSTNLPVLALLLLLYGWSITPLMYPASFVFKIPSTAYVVLTSVNLFIGINGSVATFVLELFTDNKLNNINDILKSVFLIFPHFCLGRGLIDMVKNQAMADALERFGENRFVSPLSWDLVGRNLFAMAVEGVVFFLITVLIQYRFFIRPRPVNAKLSPLNDEDEDVRRERQRILDGGGQNDILEIKELTKIYRRKRKPAVDRICVGIPPGECFGLLGVNGAGKSSTFKMLTGDTTVTRGDAFLNKNSILSNIHEVHQNMGYCPQFDAITELLTGREHVEFFALLRGVPEKEVGKVGEWAIRKLGLVKYGEKYAGNYSGGNKRKLSTAMALIGGPPVVFLDEPTTGMDPKARRFLWNCALSVVKEGRSVVLTSHSMEECEALCTRMAIMVNGRFRCLGSVQHLKNRFGDGYTIVVRIAGSNPDLKPVQDFFGLAFPGSVLKEKHRNMLQYQLPSSLSSLARIFSILSQSKKRLHIEDYSVSQTTLDQVFVNFAKDQSDDDHLKDLSLHKNQTVVDVAVLTSFLQDEKVKESYV</sequence>
<protein>
    <recommendedName>
        <fullName evidence="55">Phospholipid-transporting ATPase ABCA1</fullName>
        <ecNumber evidence="50">7.6.2.1</ecNumber>
    </recommendedName>
    <alternativeName>
        <fullName>ATP-binding cassette sub-family A member 1</fullName>
    </alternativeName>
    <alternativeName>
        <fullName>ATP-binding cassette transporter 1</fullName>
        <shortName>ABC-1</shortName>
        <shortName>ATP-binding cassette 1</shortName>
    </alternativeName>
    <alternativeName>
        <fullName>Cholesterol efflux regulatory protein</fullName>
    </alternativeName>
</protein>
<organism>
    <name type="scientific">Homo sapiens</name>
    <name type="common">Human</name>
    <dbReference type="NCBI Taxonomy" id="9606"/>
    <lineage>
        <taxon>Eukaryota</taxon>
        <taxon>Metazoa</taxon>
        <taxon>Chordata</taxon>
        <taxon>Craniata</taxon>
        <taxon>Vertebrata</taxon>
        <taxon>Euteleostomi</taxon>
        <taxon>Mammalia</taxon>
        <taxon>Eutheria</taxon>
        <taxon>Euarchontoglires</taxon>
        <taxon>Primates</taxon>
        <taxon>Haplorrhini</taxon>
        <taxon>Catarrhini</taxon>
        <taxon>Hominidae</taxon>
        <taxon>Homo</taxon>
    </lineage>
</organism>
<evidence type="ECO:0000250" key="1">
    <source>
        <dbReference type="UniProtKB" id="P41233"/>
    </source>
</evidence>
<evidence type="ECO:0000255" key="2"/>
<evidence type="ECO:0000255" key="3">
    <source>
        <dbReference type="PROSITE-ProRule" id="PRU00434"/>
    </source>
</evidence>
<evidence type="ECO:0000256" key="4">
    <source>
        <dbReference type="SAM" id="MobiDB-lite"/>
    </source>
</evidence>
<evidence type="ECO:0000269" key="5">
    <source>
    </source>
</evidence>
<evidence type="ECO:0000269" key="6">
    <source>
    </source>
</evidence>
<evidence type="ECO:0000269" key="7">
    <source>
    </source>
</evidence>
<evidence type="ECO:0000269" key="8">
    <source>
    </source>
</evidence>
<evidence type="ECO:0000269" key="9">
    <source>
    </source>
</evidence>
<evidence type="ECO:0000269" key="10">
    <source>
    </source>
</evidence>
<evidence type="ECO:0000269" key="11">
    <source>
    </source>
</evidence>
<evidence type="ECO:0000269" key="12">
    <source>
    </source>
</evidence>
<evidence type="ECO:0000269" key="13">
    <source>
    </source>
</evidence>
<evidence type="ECO:0000269" key="14">
    <source>
    </source>
</evidence>
<evidence type="ECO:0000269" key="15">
    <source>
    </source>
</evidence>
<evidence type="ECO:0000269" key="16">
    <source>
    </source>
</evidence>
<evidence type="ECO:0000269" key="17">
    <source>
    </source>
</evidence>
<evidence type="ECO:0000269" key="18">
    <source>
    </source>
</evidence>
<evidence type="ECO:0000269" key="19">
    <source>
    </source>
</evidence>
<evidence type="ECO:0000269" key="20">
    <source>
    </source>
</evidence>
<evidence type="ECO:0000269" key="21">
    <source>
    </source>
</evidence>
<evidence type="ECO:0000269" key="22">
    <source>
    </source>
</evidence>
<evidence type="ECO:0000269" key="23">
    <source>
    </source>
</evidence>
<evidence type="ECO:0000269" key="24">
    <source>
    </source>
</evidence>
<evidence type="ECO:0000269" key="25">
    <source>
    </source>
</evidence>
<evidence type="ECO:0000269" key="26">
    <source>
    </source>
</evidence>
<evidence type="ECO:0000269" key="27">
    <source>
    </source>
</evidence>
<evidence type="ECO:0000269" key="28">
    <source>
    </source>
</evidence>
<evidence type="ECO:0000269" key="29">
    <source>
    </source>
</evidence>
<evidence type="ECO:0000269" key="30">
    <source>
    </source>
</evidence>
<evidence type="ECO:0000269" key="31">
    <source>
    </source>
</evidence>
<evidence type="ECO:0000269" key="32">
    <source>
    </source>
</evidence>
<evidence type="ECO:0000269" key="33">
    <source>
    </source>
</evidence>
<evidence type="ECO:0000269" key="34">
    <source>
    </source>
</evidence>
<evidence type="ECO:0000269" key="35">
    <source>
    </source>
</evidence>
<evidence type="ECO:0000269" key="36">
    <source>
    </source>
</evidence>
<evidence type="ECO:0000269" key="37">
    <source>
    </source>
</evidence>
<evidence type="ECO:0000269" key="38">
    <source>
    </source>
</evidence>
<evidence type="ECO:0000269" key="39">
    <source>
    </source>
</evidence>
<evidence type="ECO:0000269" key="40">
    <source>
    </source>
</evidence>
<evidence type="ECO:0000269" key="41">
    <source>
    </source>
</evidence>
<evidence type="ECO:0000269" key="42">
    <source>
    </source>
</evidence>
<evidence type="ECO:0000269" key="43">
    <source>
    </source>
</evidence>
<evidence type="ECO:0000269" key="44">
    <source>
    </source>
</evidence>
<evidence type="ECO:0000269" key="45">
    <source>
    </source>
</evidence>
<evidence type="ECO:0000269" key="46">
    <source>
    </source>
</evidence>
<evidence type="ECO:0000269" key="47">
    <source>
    </source>
</evidence>
<evidence type="ECO:0000269" key="48">
    <source>
    </source>
</evidence>
<evidence type="ECO:0000269" key="49">
    <source>
    </source>
</evidence>
<evidence type="ECO:0000269" key="50">
    <source>
    </source>
</evidence>
<evidence type="ECO:0000269" key="51">
    <source>
    </source>
</evidence>
<evidence type="ECO:0000269" key="52">
    <source>
    </source>
</evidence>
<evidence type="ECO:0000269" key="53">
    <source>
    </source>
</evidence>
<evidence type="ECO:0000269" key="54">
    <source ref="2"/>
</evidence>
<evidence type="ECO:0000305" key="55"/>
<evidence type="ECO:0000305" key="56">
    <source>
    </source>
</evidence>
<evidence type="ECO:0000305" key="57">
    <source>
    </source>
</evidence>
<evidence type="ECO:0000305" key="58">
    <source>
    </source>
</evidence>
<evidence type="ECO:0000305" key="59">
    <source>
    </source>
</evidence>
<evidence type="ECO:0000312" key="60">
    <source>
        <dbReference type="HGNC" id="HGNC:29"/>
    </source>
</evidence>
<evidence type="ECO:0007829" key="61">
    <source>
        <dbReference type="PDB" id="7TBW"/>
    </source>
</evidence>
<evidence type="ECO:0007829" key="62">
    <source>
        <dbReference type="PDB" id="7TC0"/>
    </source>
</evidence>